<sequence>MPMFIVNTNVPRASVPDGFLSELTQQLAQATGKPPQYIAVHVVPDQLMAFGGSSEPCALCSLHSIGKIGGAQNRSYSKLLCGLLAERLRISPDRVYINYYDMNAANVGWNNSTFA</sequence>
<accession>P14174</accession>
<accession>A5Z1R8</accession>
<accession>B2R4S3</accession>
<accession>Q2V4Y5</accession>
<accession>Q6FHV0</accession>
<reference key="1">
    <citation type="journal article" date="1989" name="Proc. Natl. Acad. Sci. U.S.A.">
        <title>Molecular cloning of a cDNA encoding a human macrophage migration inhibitory factor.</title>
        <authorList>
            <person name="Weiser W.Y."/>
            <person name="Temple P.A."/>
            <person name="Witek-Giannotti J.S."/>
            <person name="Remold H.G."/>
            <person name="Clark S.C."/>
            <person name="David J.R."/>
        </authorList>
    </citation>
    <scope>NUCLEOTIDE SEQUENCE [MRNA]</scope>
    <scope>INDUCTION</scope>
    <scope>SUBCELLULAR LOCATION</scope>
</reference>
<reference key="2">
    <citation type="journal article" date="1993" name="Proc. Natl. Acad. Sci. U.S.A.">
        <title>Molecular cloning and functional expression of a cDNA encoding glycosylation-inhibiting factor.</title>
        <authorList>
            <person name="Mikayama T."/>
            <person name="Nakano T."/>
            <person name="Gomi H."/>
            <person name="Nakagawa Y."/>
            <person name="Liu Y.C."/>
            <person name="Iwamatsu A."/>
            <person name="Weiser W.Y."/>
            <person name="Ishizaka K."/>
            <person name="Sato M."/>
            <person name="Ishii Y."/>
        </authorList>
    </citation>
    <scope>NUCLEOTIDE SEQUENCE [MRNA]</scope>
    <scope>SUBCELLULAR LOCATION</scope>
</reference>
<reference key="3">
    <citation type="journal article" date="1994" name="Biochemistry">
        <title>Purification, bioactivity, and secondary structure analysis of mouse and human macrophage migration inhibitory factor (MIF).</title>
        <authorList>
            <person name="Bernhagen J."/>
            <person name="Mitchell R.A."/>
            <person name="Calandra T."/>
            <person name="Voelter W."/>
            <person name="Cerami A."/>
            <person name="Bucala R."/>
        </authorList>
    </citation>
    <scope>NUCLEOTIDE SEQUENCE [MRNA]</scope>
</reference>
<reference key="4">
    <citation type="journal article" date="1994" name="Genomics">
        <title>Cloning the human gene for macrophage migration inhibitory factor (MIF).</title>
        <authorList>
            <person name="Paralkar V."/>
            <person name="Wistow G.J."/>
        </authorList>
    </citation>
    <scope>NUCLEOTIDE SEQUENCE [GENOMIC DNA]</scope>
</reference>
<reference key="5">
    <citation type="submission" date="2002-01" db="EMBL/GenBank/DDBJ databases">
        <title>The effect of macrophage migration inhibitory factor in the atherogenesis process.</title>
        <authorList>
            <person name="Shan Z.X."/>
            <person name="Yu X.Y."/>
            <person name="Lin S.G."/>
            <person name="Lin Q.X."/>
            <person name="Fu Y.H."/>
            <person name="Tan H.H."/>
        </authorList>
    </citation>
    <scope>NUCLEOTIDE SEQUENCE [MRNA]</scope>
</reference>
<reference key="6">
    <citation type="submission" date="2007-05" db="EMBL/GenBank/DDBJ databases">
        <title>Amplification and expression of macrophage migration inhibitory factor (MIF) in tissue of squamous carcinoma of the cervix.</title>
        <authorList>
            <person name="Wu S.H."/>
            <person name="Xie J."/>
            <person name="Shang H.X."/>
            <person name="Li Y."/>
            <person name="Zhang Z."/>
        </authorList>
    </citation>
    <scope>NUCLEOTIDE SEQUENCE [MRNA]</scope>
</reference>
<reference key="7">
    <citation type="journal article" date="2004" name="Genome Biol.">
        <title>A genome annotation-driven approach to cloning the human ORFeome.</title>
        <authorList>
            <person name="Collins J.E."/>
            <person name="Wright C.L."/>
            <person name="Edwards C.A."/>
            <person name="Davis M.P."/>
            <person name="Grinham J.A."/>
            <person name="Cole C.G."/>
            <person name="Goward M.E."/>
            <person name="Aguado B."/>
            <person name="Mallya M."/>
            <person name="Mokrab Y."/>
            <person name="Huckle E.J."/>
            <person name="Beare D.M."/>
            <person name="Dunham I."/>
        </authorList>
    </citation>
    <scope>NUCLEOTIDE SEQUENCE [LARGE SCALE MRNA]</scope>
</reference>
<reference key="8">
    <citation type="journal article" date="2004" name="Nat. Genet.">
        <title>Complete sequencing and characterization of 21,243 full-length human cDNAs.</title>
        <authorList>
            <person name="Ota T."/>
            <person name="Suzuki Y."/>
            <person name="Nishikawa T."/>
            <person name="Otsuki T."/>
            <person name="Sugiyama T."/>
            <person name="Irie R."/>
            <person name="Wakamatsu A."/>
            <person name="Hayashi K."/>
            <person name="Sato H."/>
            <person name="Nagai K."/>
            <person name="Kimura K."/>
            <person name="Makita H."/>
            <person name="Sekine M."/>
            <person name="Obayashi M."/>
            <person name="Nishi T."/>
            <person name="Shibahara T."/>
            <person name="Tanaka T."/>
            <person name="Ishii S."/>
            <person name="Yamamoto J."/>
            <person name="Saito K."/>
            <person name="Kawai Y."/>
            <person name="Isono Y."/>
            <person name="Nakamura Y."/>
            <person name="Nagahari K."/>
            <person name="Murakami K."/>
            <person name="Yasuda T."/>
            <person name="Iwayanagi T."/>
            <person name="Wagatsuma M."/>
            <person name="Shiratori A."/>
            <person name="Sudo H."/>
            <person name="Hosoiri T."/>
            <person name="Kaku Y."/>
            <person name="Kodaira H."/>
            <person name="Kondo H."/>
            <person name="Sugawara M."/>
            <person name="Takahashi M."/>
            <person name="Kanda K."/>
            <person name="Yokoi T."/>
            <person name="Furuya T."/>
            <person name="Kikkawa E."/>
            <person name="Omura Y."/>
            <person name="Abe K."/>
            <person name="Kamihara K."/>
            <person name="Katsuta N."/>
            <person name="Sato K."/>
            <person name="Tanikawa M."/>
            <person name="Yamazaki M."/>
            <person name="Ninomiya K."/>
            <person name="Ishibashi T."/>
            <person name="Yamashita H."/>
            <person name="Murakawa K."/>
            <person name="Fujimori K."/>
            <person name="Tanai H."/>
            <person name="Kimata M."/>
            <person name="Watanabe M."/>
            <person name="Hiraoka S."/>
            <person name="Chiba Y."/>
            <person name="Ishida S."/>
            <person name="Ono Y."/>
            <person name="Takiguchi S."/>
            <person name="Watanabe S."/>
            <person name="Yosida M."/>
            <person name="Hotuta T."/>
            <person name="Kusano J."/>
            <person name="Kanehori K."/>
            <person name="Takahashi-Fujii A."/>
            <person name="Hara H."/>
            <person name="Tanase T.-O."/>
            <person name="Nomura Y."/>
            <person name="Togiya S."/>
            <person name="Komai F."/>
            <person name="Hara R."/>
            <person name="Takeuchi K."/>
            <person name="Arita M."/>
            <person name="Imose N."/>
            <person name="Musashino K."/>
            <person name="Yuuki H."/>
            <person name="Oshima A."/>
            <person name="Sasaki N."/>
            <person name="Aotsuka S."/>
            <person name="Yoshikawa Y."/>
            <person name="Matsunawa H."/>
            <person name="Ichihara T."/>
            <person name="Shiohata N."/>
            <person name="Sano S."/>
            <person name="Moriya S."/>
            <person name="Momiyama H."/>
            <person name="Satoh N."/>
            <person name="Takami S."/>
            <person name="Terashima Y."/>
            <person name="Suzuki O."/>
            <person name="Nakagawa S."/>
            <person name="Senoh A."/>
            <person name="Mizoguchi H."/>
            <person name="Goto Y."/>
            <person name="Shimizu F."/>
            <person name="Wakebe H."/>
            <person name="Hishigaki H."/>
            <person name="Watanabe T."/>
            <person name="Sugiyama A."/>
            <person name="Takemoto M."/>
            <person name="Kawakami B."/>
            <person name="Yamazaki M."/>
            <person name="Watanabe K."/>
            <person name="Kumagai A."/>
            <person name="Itakura S."/>
            <person name="Fukuzumi Y."/>
            <person name="Fujimori Y."/>
            <person name="Komiyama M."/>
            <person name="Tashiro H."/>
            <person name="Tanigami A."/>
            <person name="Fujiwara T."/>
            <person name="Ono T."/>
            <person name="Yamada K."/>
            <person name="Fujii Y."/>
            <person name="Ozaki K."/>
            <person name="Hirao M."/>
            <person name="Ohmori Y."/>
            <person name="Kawabata A."/>
            <person name="Hikiji T."/>
            <person name="Kobatake N."/>
            <person name="Inagaki H."/>
            <person name="Ikema Y."/>
            <person name="Okamoto S."/>
            <person name="Okitani R."/>
            <person name="Kawakami T."/>
            <person name="Noguchi S."/>
            <person name="Itoh T."/>
            <person name="Shigeta K."/>
            <person name="Senba T."/>
            <person name="Matsumura K."/>
            <person name="Nakajima Y."/>
            <person name="Mizuno T."/>
            <person name="Morinaga M."/>
            <person name="Sasaki M."/>
            <person name="Togashi T."/>
            <person name="Oyama M."/>
            <person name="Hata H."/>
            <person name="Watanabe M."/>
            <person name="Komatsu T."/>
            <person name="Mizushima-Sugano J."/>
            <person name="Satoh T."/>
            <person name="Shirai Y."/>
            <person name="Takahashi Y."/>
            <person name="Nakagawa K."/>
            <person name="Okumura K."/>
            <person name="Nagase T."/>
            <person name="Nomura N."/>
            <person name="Kikuchi H."/>
            <person name="Masuho Y."/>
            <person name="Yamashita R."/>
            <person name="Nakai K."/>
            <person name="Yada T."/>
            <person name="Nakamura Y."/>
            <person name="Ohara O."/>
            <person name="Isogai T."/>
            <person name="Sugano S."/>
        </authorList>
    </citation>
    <scope>NUCLEOTIDE SEQUENCE [LARGE SCALE MRNA]</scope>
    <source>
        <tissue>Brain</tissue>
    </source>
</reference>
<reference key="9">
    <citation type="submission" date="2004-05" db="EMBL/GenBank/DDBJ databases">
        <title>Cloning of human full open reading frames in Gateway(TM) system entry vector (pDONR201).</title>
        <authorList>
            <person name="Ebert L."/>
            <person name="Schick M."/>
            <person name="Neubert P."/>
            <person name="Schatten R."/>
            <person name="Henze S."/>
            <person name="Korn B."/>
        </authorList>
    </citation>
    <scope>NUCLEOTIDE SEQUENCE [LARGE SCALE MRNA]</scope>
</reference>
<reference key="10">
    <citation type="submission" date="2004-06" db="EMBL/GenBank/DDBJ databases">
        <title>Cloning of human full-length CDSs in BD Creator(TM) system donor vector.</title>
        <authorList>
            <person name="Kalnine N."/>
            <person name="Chen X."/>
            <person name="Rolfs A."/>
            <person name="Halleck A."/>
            <person name="Hines L."/>
            <person name="Eisenstein S."/>
            <person name="Koundinya M."/>
            <person name="Raphael J."/>
            <person name="Moreira D."/>
            <person name="Kelley T."/>
            <person name="LaBaer J."/>
            <person name="Lin Y."/>
            <person name="Phelan M."/>
            <person name="Farmer A."/>
        </authorList>
    </citation>
    <scope>NUCLEOTIDE SEQUENCE [LARGE SCALE MRNA]</scope>
</reference>
<reference key="11">
    <citation type="submission" date="2005-11" db="EMBL/GenBank/DDBJ databases">
        <authorList>
            <consortium name="NIEHS SNPs program"/>
        </authorList>
    </citation>
    <scope>NUCLEOTIDE SEQUENCE [GENOMIC DNA]</scope>
</reference>
<reference key="12">
    <citation type="submission" date="2005-07" db="EMBL/GenBank/DDBJ databases">
        <authorList>
            <person name="Mural R.J."/>
            <person name="Istrail S."/>
            <person name="Sutton G.G."/>
            <person name="Florea L."/>
            <person name="Halpern A.L."/>
            <person name="Mobarry C.M."/>
            <person name="Lippert R."/>
            <person name="Walenz B."/>
            <person name="Shatkay H."/>
            <person name="Dew I."/>
            <person name="Miller J.R."/>
            <person name="Flanigan M.J."/>
            <person name="Edwards N.J."/>
            <person name="Bolanos R."/>
            <person name="Fasulo D."/>
            <person name="Halldorsson B.V."/>
            <person name="Hannenhalli S."/>
            <person name="Turner R."/>
            <person name="Yooseph S."/>
            <person name="Lu F."/>
            <person name="Nusskern D.R."/>
            <person name="Shue B.C."/>
            <person name="Zheng X.H."/>
            <person name="Zhong F."/>
            <person name="Delcher A.L."/>
            <person name="Huson D.H."/>
            <person name="Kravitz S.A."/>
            <person name="Mouchard L."/>
            <person name="Reinert K."/>
            <person name="Remington K.A."/>
            <person name="Clark A.G."/>
            <person name="Waterman M.S."/>
            <person name="Eichler E.E."/>
            <person name="Adams M.D."/>
            <person name="Hunkapiller M.W."/>
            <person name="Myers E.W."/>
            <person name="Venter J.C."/>
        </authorList>
    </citation>
    <scope>NUCLEOTIDE SEQUENCE [LARGE SCALE GENOMIC DNA]</scope>
</reference>
<reference key="13">
    <citation type="journal article" date="2004" name="Genome Res.">
        <title>The status, quality, and expansion of the NIH full-length cDNA project: the Mammalian Gene Collection (MGC).</title>
        <authorList>
            <consortium name="The MGC Project Team"/>
        </authorList>
    </citation>
    <scope>NUCLEOTIDE SEQUENCE [LARGE SCALE MRNA]</scope>
    <source>
        <tissue>Brain</tissue>
        <tissue>Lung</tissue>
        <tissue>Skin</tissue>
        <tissue>Uterus</tissue>
    </source>
</reference>
<reference key="14">
    <citation type="journal article" date="2003" name="Nat. Biotechnol.">
        <title>Exploring proteomes and analyzing protein processing by mass spectrometric identification of sorted N-terminal peptides.</title>
        <authorList>
            <person name="Gevaert K."/>
            <person name="Goethals M."/>
            <person name="Martens L."/>
            <person name="Van Damme J."/>
            <person name="Staes A."/>
            <person name="Thomas G.R."/>
            <person name="Vandekerckhove J."/>
        </authorList>
    </citation>
    <scope>PROTEIN SEQUENCE OF 2-12</scope>
    <source>
        <tissue>Platelet</tissue>
    </source>
</reference>
<reference key="15">
    <citation type="journal article" date="1992" name="Electrophoresis">
        <title>Human liver protein map: a reference database established by microsequencing and gel comparison.</title>
        <authorList>
            <person name="Hochstrasser D.F."/>
            <person name="Frutiger S."/>
            <person name="Paquet N."/>
            <person name="Bairoch A."/>
            <person name="Ravier F."/>
            <person name="Pasquali C."/>
            <person name="Sanchez J.-C."/>
            <person name="Tissot J.-D."/>
            <person name="Bjellqvist B."/>
            <person name="Vargas R."/>
            <person name="Appel R.D."/>
            <person name="Hughes G.J."/>
        </authorList>
    </citation>
    <scope>PROTEIN SEQUENCE OF 2-11</scope>
    <source>
        <tissue>Liver</tissue>
    </source>
</reference>
<reference key="16">
    <citation type="journal article" date="1993" name="Arch. Biochem. Biophys.">
        <title>The major binding protein of the interferon antagonist sarcolectin in human placenta is a macrophage migration inhibitory factor.</title>
        <authorList>
            <person name="Zeng F.Y."/>
            <person name="Weiser W.Y."/>
            <person name="Kratzin H."/>
            <person name="Stahl B."/>
            <person name="Karas M."/>
            <person name="Gabius H.J."/>
        </authorList>
    </citation>
    <scope>PROTEIN SEQUENCE OF 3-24</scope>
</reference>
<reference key="17">
    <citation type="journal article" date="1993" name="Proc. Natl. Acad. Sci. U.S.A.">
        <title>A macrophage migration inhibitory factor is expressed in the differentiating cells of the eye lens.</title>
        <authorList>
            <person name="Wistow G.J."/>
            <person name="Shaughnessy M."/>
            <person name="Lee D.C."/>
            <person name="Hodin J."/>
            <person name="Zelenka P.S."/>
        </authorList>
    </citation>
    <scope>NUCLEOTIDE SEQUENCE [MRNA] OF 10-115</scope>
    <source>
        <tissue>Lens</tissue>
    </source>
</reference>
<reference key="18">
    <citation type="journal article" date="2000" name="Nature">
        <title>Intracellular action of the cytokine MIF to modulate AP-1 activity and the cell cycle through Jab1.</title>
        <authorList>
            <person name="Kleemann R."/>
            <person name="Hausser A."/>
            <person name="Geiger G."/>
            <person name="Mischke R."/>
            <person name="Burger-Kentischer A."/>
            <person name="Flieger O."/>
            <person name="Johannes F.-J."/>
            <person name="Roger T."/>
            <person name="Calandra T."/>
            <person name="Kapurniotu A."/>
            <person name="Grell M."/>
            <person name="Finkelmeier D."/>
            <person name="Brunner H."/>
            <person name="Bernhagen J."/>
        </authorList>
    </citation>
    <scope>INTERACTION WITH COPS5</scope>
    <scope>SUBCELLULAR LOCATION</scope>
</reference>
<reference key="19">
    <citation type="journal article" date="2001" name="Arthritis Rheum.">
        <title>A novel 5'-flanking region polymorphism of macrophage migration inhibitory factor is associated with systemic-onset juvenile idiopathic arthritis.</title>
        <authorList>
            <consortium name="The British peadiatric rheumatology study group"/>
            <person name="Donn R.P."/>
            <person name="Shelley E."/>
            <person name="Ollier W.E.R."/>
            <person name="Thomson W."/>
        </authorList>
    </citation>
    <scope>INVOLVEMENT IN RASJ</scope>
</reference>
<reference key="20">
    <citation type="journal article" date="2001" name="Biochem. J.">
        <title>Macrophage migration inhibitory factor of the parasitic nematode Trichinella spiralis.</title>
        <authorList>
            <person name="Tan T.H.P."/>
            <person name="Edgerton S.A.V."/>
            <person name="Kumari R."/>
            <person name="McAlister M.S.B."/>
            <person name="Roe S.M."/>
            <person name="Nagl S."/>
            <person name="Pearl L.H."/>
            <person name="Selkirk M.E."/>
            <person name="Bianco A.E."/>
            <person name="Totty N.F."/>
            <person name="Engwerda C."/>
            <person name="Gray C.A."/>
            <person name="Meyer D.J."/>
            <person name="Rowe S.M."/>
        </authorList>
    </citation>
    <scope>FUNCTION</scope>
    <scope>CATALYTIC ACTIVITY</scope>
    <scope>BIOPHYSICOCHEMICAL PROPERTIES</scope>
</reference>
<reference key="21">
    <citation type="journal article" date="2003" name="FEBS Lett.">
        <title>The apoptosis-associated protein BNIPL interacts with two cell proliferation-related proteins, MIF and GFER.</title>
        <authorList>
            <person name="Shen L."/>
            <person name="Hu J."/>
            <person name="Lu H."/>
            <person name="Wu M."/>
            <person name="Qin W."/>
            <person name="Wan D."/>
            <person name="Li Y.-Y."/>
            <person name="Gu J."/>
        </authorList>
    </citation>
    <scope>INTERACTION WITH BNIPL</scope>
</reference>
<reference key="22">
    <citation type="journal article" date="2003" name="J. Exp. Med.">
        <title>MIF signal transduction initiated by binding to CD74.</title>
        <authorList>
            <person name="Leng L."/>
            <person name="Metz C.N."/>
            <person name="Fang Y."/>
            <person name="Xu J."/>
            <person name="Donnelly S."/>
            <person name="Baugh J."/>
            <person name="Delohery T."/>
            <person name="Chen Y."/>
            <person name="Mitchell R.A."/>
            <person name="Bucala R."/>
        </authorList>
    </citation>
    <scope>INTERACTION WITH CD74</scope>
</reference>
<reference key="23">
    <citation type="journal article" date="2005" name="Infect. Immun.">
        <title>Macrophage migration inhibitory factor reduces the growth of virulent Mycobacterium tuberculosis in human macrophages.</title>
        <authorList>
            <person name="Oddo M."/>
            <person name="Calandra T."/>
            <person name="Bucala R."/>
            <person name="Meylan P.R.A."/>
        </authorList>
    </citation>
    <scope>FUNCTION</scope>
    <scope>INDUCTION</scope>
    <scope>SUBCELLULAR LOCATION</scope>
</reference>
<reference key="24">
    <citation type="journal article" date="2007" name="Clin. Infect. Dis.">
        <title>Association between high levels of blood macrophage migration inhibitory factor, inappropriate adrenal response, and early death in patients with severe sepsis.</title>
        <authorList>
            <person name="Emonts M."/>
            <person name="Sweep F.C.G.J."/>
            <person name="Grebenchtchikov N."/>
            <person name="Geurts-Moespot A."/>
            <person name="Knaup M."/>
            <person name="Chanson A.L."/>
            <person name="Erard V."/>
            <person name="Renner P."/>
            <person name="Hermans P.W.M."/>
            <person name="Hazelzet J.A."/>
            <person name="Calandra T."/>
        </authorList>
    </citation>
    <scope>ROLE IN SEPSIS-RELATED DEATH</scope>
</reference>
<reference key="25">
    <citation type="journal article" date="2009" name="J. Immunol.">
        <title>The Golgi-associated protein p115 mediates the secretion of macrophage migration inhibitory factor.</title>
        <authorList>
            <person name="Merk M."/>
            <person name="Baugh J."/>
            <person name="Zierow S."/>
            <person name="Leng L."/>
            <person name="Pal U."/>
            <person name="Lee S.J."/>
            <person name="Ebert A.D."/>
            <person name="Mizue Y."/>
            <person name="Trent J.O."/>
            <person name="Mitchell R."/>
            <person name="Nickel W."/>
            <person name="Kavathas P.B."/>
            <person name="Bernhagen J."/>
            <person name="Bucala R."/>
        </authorList>
    </citation>
    <scope>SUBCELLULAR LOCATION</scope>
    <scope>INTERACTION WITH USO1</scope>
</reference>
<reference key="26">
    <citation type="journal article" date="2009" name="Science">
        <title>Lysine acetylation targets protein complexes and co-regulates major cellular functions.</title>
        <authorList>
            <person name="Choudhary C."/>
            <person name="Kumar C."/>
            <person name="Gnad F."/>
            <person name="Nielsen M.L."/>
            <person name="Rehman M."/>
            <person name="Walther T.C."/>
            <person name="Olsen J.V."/>
            <person name="Mann M."/>
        </authorList>
    </citation>
    <scope>ACETYLATION [LARGE SCALE ANALYSIS] AT LYS-78</scope>
    <scope>IDENTIFICATION BY MASS SPECTROMETRY [LARGE SCALE ANALYSIS]</scope>
</reference>
<reference key="27">
    <citation type="journal article" date="2011" name="BMC Syst. Biol.">
        <title>Initial characterization of the human central proteome.</title>
        <authorList>
            <person name="Burkard T.R."/>
            <person name="Planyavsky M."/>
            <person name="Kaupe I."/>
            <person name="Breitwieser F.P."/>
            <person name="Buerckstuemmer T."/>
            <person name="Bennett K.L."/>
            <person name="Superti-Furga G."/>
            <person name="Colinge J."/>
        </authorList>
    </citation>
    <scope>IDENTIFICATION BY MASS SPECTROMETRY [LARGE SCALE ANALYSIS]</scope>
</reference>
<reference key="28">
    <citation type="journal article" date="2012" name="Mol. Cell. Proteomics">
        <title>Comparative large-scale characterisation of plant vs. mammal proteins reveals similar and idiosyncratic N-alpha acetylation features.</title>
        <authorList>
            <person name="Bienvenut W.V."/>
            <person name="Sumpton D."/>
            <person name="Martinez A."/>
            <person name="Lilla S."/>
            <person name="Espagne C."/>
            <person name="Meinnel T."/>
            <person name="Giglione C."/>
        </authorList>
    </citation>
    <scope>CLEAVAGE OF INITIATOR METHIONINE [LARGE SCALE ANALYSIS]</scope>
    <scope>IDENTIFICATION BY MASS SPECTROMETRY [LARGE SCALE ANALYSIS]</scope>
</reference>
<reference key="29">
    <citation type="journal article" date="2012" name="Proc. Natl. Acad. Sci. U.S.A.">
        <title>N-terminal acetylome analyses and functional insights of the N-terminal acetyltransferase NatB.</title>
        <authorList>
            <person name="Van Damme P."/>
            <person name="Lasa M."/>
            <person name="Polevoda B."/>
            <person name="Gazquez C."/>
            <person name="Elosegui-Artola A."/>
            <person name="Kim D.S."/>
            <person name="De Juan-Pardo E."/>
            <person name="Demeyer K."/>
            <person name="Hole K."/>
            <person name="Larrea E."/>
            <person name="Timmerman E."/>
            <person name="Prieto J."/>
            <person name="Arnesen T."/>
            <person name="Sherman F."/>
            <person name="Gevaert K."/>
            <person name="Aldabe R."/>
        </authorList>
    </citation>
    <scope>IDENTIFICATION BY MASS SPECTROMETRY [LARGE SCALE ANALYSIS]</scope>
</reference>
<reference key="30">
    <citation type="journal article" date="2014" name="J. Proteomics">
        <title>An enzyme assisted RP-RPLC approach for in-depth analysis of human liver phosphoproteome.</title>
        <authorList>
            <person name="Bian Y."/>
            <person name="Song C."/>
            <person name="Cheng K."/>
            <person name="Dong M."/>
            <person name="Wang F."/>
            <person name="Huang J."/>
            <person name="Sun D."/>
            <person name="Wang L."/>
            <person name="Ye M."/>
            <person name="Zou H."/>
        </authorList>
    </citation>
    <scope>IDENTIFICATION BY MASS SPECTROMETRY [LARGE SCALE ANALYSIS]</scope>
    <source>
        <tissue>Liver</tissue>
    </source>
</reference>
<reference key="31">
    <citation type="journal article" date="2015" name="Proteomics">
        <title>N-terminome analysis of the human mitochondrial proteome.</title>
        <authorList>
            <person name="Vaca Jacome A.S."/>
            <person name="Rabilloud T."/>
            <person name="Schaeffer-Reiss C."/>
            <person name="Rompais M."/>
            <person name="Ayoub D."/>
            <person name="Lane L."/>
            <person name="Bairoch A."/>
            <person name="Van Dorsselaer A."/>
            <person name="Carapito C."/>
        </authorList>
    </citation>
    <scope>IDENTIFICATION BY MASS SPECTROMETRY [LARGE SCALE ANALYSIS]</scope>
</reference>
<reference key="32">
    <citation type="journal article" date="1996" name="FEBS Lett.">
        <title>Crystal structure of macrophage migration inhibitory factor from human lymphocyte at 2.1-A resolution.</title>
        <authorList>
            <person name="Sugimoto H."/>
            <person name="Suzuki M."/>
            <person name="Nakagawa A."/>
            <person name="Tanaka I."/>
            <person name="Nishihira J."/>
        </authorList>
    </citation>
    <scope>X-RAY CRYSTALLOGRAPHY (2.1 ANGSTROMS)</scope>
</reference>
<reference key="33">
    <citation type="journal article" date="1996" name="Proc. Natl. Acad. Sci. U.S.A.">
        <title>The crystal structure of human glycosylation-inhibiting factor is a trimeric barrel with three 6-stranded beta-sheets.</title>
        <authorList>
            <person name="Kato Y."/>
            <person name="Muto T."/>
            <person name="Tomura T."/>
            <person name="Tsumura H."/>
            <person name="Watarai H."/>
            <person name="Mikayama T."/>
            <person name="Ishizaka K."/>
            <person name="Kuroki R."/>
        </authorList>
    </citation>
    <scope>X-RAY CRYSTALLOGRAPHY (1.9 ANGSTROMS)</scope>
    <scope>SUBUNIT</scope>
</reference>
<reference key="34">
    <citation type="journal article" date="1996" name="Proc. Natl. Acad. Sci. U.S.A.">
        <title>Crystal structure at 2.6-A resolution of human macrophage migration inhibitory factor.</title>
        <authorList>
            <person name="Sun H.W."/>
            <person name="Bernhagen J."/>
            <person name="Bucala R."/>
            <person name="Lolis E."/>
        </authorList>
    </citation>
    <scope>X-RAY CRYSTALLOGRAPHY (2.6 ANGSTROMS)</scope>
</reference>
<reference key="35">
    <citation type="journal article" date="1999" name="Biochemistry">
        <title>Pro-1 of macrophage migration inhibitory factor functions as a catalytic base in the phenylpyruvate tautomerase activity.</title>
        <authorList>
            <person name="Lubetsky J.B."/>
            <person name="Swope M."/>
            <person name="Dealwis C."/>
            <person name="Blake P."/>
            <person name="Lolis E."/>
        </authorList>
    </citation>
    <scope>X-RAY CRYSTALLOGRAPHY (2.0 ANGSTROMS)</scope>
</reference>
<reference key="36">
    <citation type="journal article" date="2001" name="J. Med. Chem.">
        <title>Coumarin and chromen-4-one analogues as tautomerase inhibitors of macrophage migration inhibitory factor: discovery and X-ray crystallography.</title>
        <authorList>
            <person name="Orita M."/>
            <person name="Yamamoto S."/>
            <person name="Katayama N."/>
            <person name="Aoki M."/>
            <person name="Takayama K."/>
            <person name="Yamagiwa Y."/>
            <person name="Seki N."/>
            <person name="Suzuki H."/>
            <person name="Kurihara H."/>
            <person name="Sakashita H."/>
            <person name="Takeuchi M."/>
            <person name="Fujita S."/>
            <person name="Yamada T."/>
            <person name="Tanaka A."/>
        </authorList>
    </citation>
    <scope>X-RAY CRYSTALLOGRAPHY (1.5 ANGSTROMS) IN COMPLEX WITH TAUTOMERASE INHIBITOR</scope>
    <scope>CATALYTIC ACTIVITY</scope>
</reference>
<reference key="37">
    <citation type="journal article" date="2007" name="J. Biol. Chem.">
        <title>Alternative chemical modifications reverse the binding orientation of a pharmacophore scaffold in the active site of macrophage migration inhibitory factor.</title>
        <authorList>
            <person name="Crichlow G.V."/>
            <person name="Cheng K.F."/>
            <person name="Dabideen D."/>
            <person name="Ochani M."/>
            <person name="Aljabari B."/>
            <person name="Pavlov V.A."/>
            <person name="Miller E.J."/>
            <person name="Lolis E."/>
            <person name="Al-Abed Y."/>
        </authorList>
    </citation>
    <scope>X-RAY CRYSTALLOGRAPHY (1.75 ANGSTROMS) IN COMPLEX WITH CARBONYLOXIME-BASED INHIBITORS</scope>
    <scope>SUBUNIT</scope>
    <scope>CATALYTIC ACTIVITY</scope>
    <scope>FUNCTION</scope>
</reference>
<reference key="38">
    <citation type="journal article" date="2009" name="Biochemistry">
        <title>Structural and kinetic analyses of macrophage migration inhibitory factor active site interactions.</title>
        <authorList>
            <person name="Crichlow G.V."/>
            <person name="Lubetsky J.B."/>
            <person name="Leng L."/>
            <person name="Bucala R."/>
            <person name="Lolis E.J."/>
        </authorList>
    </citation>
    <scope>X-RAY CRYSTALLOGRAPHY (1.55 ANGSTROMS) IN COMPLEX WITH THE INHIBITOR N-ACETYL-P-BENZOQUINONE IMINE</scope>
    <scope>SUBUNIT</scope>
    <scope>CATALYTIC ACTIVITY</scope>
</reference>
<reference key="39">
    <citation type="journal article" date="2013" name="Proc. Natl. Acad. Sci. U.S.A.">
        <title>MIF intersubunit disulfide mutant antagonist supports activation of CD74 by endogenous MIF trimer at physiologic concentrations.</title>
        <authorList>
            <person name="Fan C."/>
            <person name="Rajasekaran D."/>
            <person name="Syed M.A."/>
            <person name="Leng L."/>
            <person name="Loria J.P."/>
            <person name="Bhandari V."/>
            <person name="Bucala R."/>
            <person name="Lolis E.J."/>
        </authorList>
    </citation>
    <scope>X-RAY CRYSTALLOGRAPHY (2.33 ANGSTROMS)</scope>
    <scope>SUBUNIT</scope>
    <scope>FUNCTION</scope>
    <scope>CATALYTIC ACTIVITY</scope>
    <scope>INTERACTION WITH CD74</scope>
    <scope>MUTAGENESIS OF ASN-111</scope>
</reference>
<name>MIF_HUMAN</name>
<gene>
    <name evidence="19 21" type="primary">MIF</name>
    <name type="synonym">GLIF</name>
    <name type="synonym">MMIF</name>
</gene>
<feature type="initiator methionine" description="Removed" evidence="6 9 23">
    <location>
        <position position="1"/>
    </location>
</feature>
<feature type="chain" id="PRO_0000158062" description="Macrophage migration inhibitory factor">
    <location>
        <begin position="2"/>
        <end position="115"/>
    </location>
</feature>
<feature type="active site" description="Proton acceptor; via imino nitrogen" evidence="1">
    <location>
        <position position="2"/>
    </location>
</feature>
<feature type="binding site" evidence="3 12 13">
    <location>
        <position position="33"/>
    </location>
    <ligand>
        <name>substrate</name>
    </ligand>
</feature>
<feature type="binding site" evidence="3 12 13">
    <location>
        <position position="65"/>
    </location>
    <ligand>
        <name>substrate</name>
    </ligand>
</feature>
<feature type="binding site" evidence="3 12 13">
    <location>
        <position position="98"/>
    </location>
    <ligand>
        <name>substrate</name>
    </ligand>
</feature>
<feature type="modified residue" description="N6-acetyllysine; alternate" evidence="22">
    <location>
        <position position="78"/>
    </location>
</feature>
<feature type="modified residue" description="N6-succinyllysine; alternate" evidence="1">
    <location>
        <position position="78"/>
    </location>
</feature>
<feature type="mutagenesis site" description="Causes formation of interchain disulfide bonds with Cys-81 from another subunit." evidence="15">
    <original>N</original>
    <variation>C</variation>
    <location>
        <position position="111"/>
    </location>
</feature>
<feature type="sequence conflict" description="In Ref. 6; ABQ95571." evidence="20" ref="6">
    <original>CAL</original>
    <variation>WAF</variation>
    <location>
        <begin position="57"/>
        <end position="59"/>
    </location>
</feature>
<feature type="sequence conflict" description="In Ref. 9; CAG46452." evidence="20" ref="9">
    <original>K</original>
    <variation>R</variation>
    <location>
        <position position="67"/>
    </location>
</feature>
<feature type="sequence conflict" description="In Ref. 9; CAG46452." evidence="20" ref="9">
    <original>L</original>
    <variation>Q</variation>
    <location>
        <position position="79"/>
    </location>
</feature>
<feature type="sequence conflict" description="In Ref. 6; ABQ95571." evidence="20" ref="6">
    <original>C</original>
    <variation>F</variation>
    <location>
        <position position="81"/>
    </location>
</feature>
<feature type="sequence conflict" description="In Ref. 1; AAA36315." evidence="20" ref="1">
    <original>N</original>
    <variation>S</variation>
    <location>
        <position position="106"/>
    </location>
</feature>
<feature type="sequence conflict" description="In Ref. 6; ABQ95571." evidence="20" ref="6">
    <original>T</original>
    <variation>P</variation>
    <location>
        <position position="113"/>
    </location>
</feature>
<feature type="strand" evidence="25">
    <location>
        <begin position="3"/>
        <end position="10"/>
    </location>
</feature>
<feature type="helix" evidence="25">
    <location>
        <begin position="12"/>
        <end position="14"/>
    </location>
</feature>
<feature type="helix" evidence="25">
    <location>
        <begin position="19"/>
        <end position="31"/>
    </location>
</feature>
<feature type="helix" evidence="25">
    <location>
        <begin position="35"/>
        <end position="37"/>
    </location>
</feature>
<feature type="strand" evidence="25">
    <location>
        <begin position="39"/>
        <end position="43"/>
    </location>
</feature>
<feature type="strand" evidence="25">
    <location>
        <begin position="47"/>
        <end position="50"/>
    </location>
</feature>
<feature type="strand" evidence="25">
    <location>
        <begin position="58"/>
        <end position="66"/>
    </location>
</feature>
<feature type="helix" evidence="25">
    <location>
        <begin position="70"/>
        <end position="88"/>
    </location>
</feature>
<feature type="helix" evidence="25">
    <location>
        <begin position="92"/>
        <end position="94"/>
    </location>
</feature>
<feature type="strand" evidence="25">
    <location>
        <begin position="95"/>
        <end position="101"/>
    </location>
</feature>
<feature type="helix" evidence="25">
    <location>
        <begin position="104"/>
        <end position="106"/>
    </location>
</feature>
<feature type="strand" evidence="25">
    <location>
        <begin position="107"/>
        <end position="109"/>
    </location>
</feature>
<feature type="strand" evidence="24">
    <location>
        <begin position="112"/>
        <end position="114"/>
    </location>
</feature>
<organism>
    <name type="scientific">Homo sapiens</name>
    <name type="common">Human</name>
    <dbReference type="NCBI Taxonomy" id="9606"/>
    <lineage>
        <taxon>Eukaryota</taxon>
        <taxon>Metazoa</taxon>
        <taxon>Chordata</taxon>
        <taxon>Craniata</taxon>
        <taxon>Vertebrata</taxon>
        <taxon>Euteleostomi</taxon>
        <taxon>Mammalia</taxon>
        <taxon>Eutheria</taxon>
        <taxon>Euarchontoglires</taxon>
        <taxon>Primates</taxon>
        <taxon>Haplorrhini</taxon>
        <taxon>Catarrhini</taxon>
        <taxon>Hominidae</taxon>
        <taxon>Homo</taxon>
    </lineage>
</organism>
<dbReference type="EC" id="5.3.2.1" evidence="4"/>
<dbReference type="EC" id="5.3.3.12" evidence="12"/>
<dbReference type="EMBL" id="M25639">
    <property type="protein sequence ID" value="AAA36315.1"/>
    <property type="molecule type" value="mRNA"/>
</dbReference>
<dbReference type="EMBL" id="L10612">
    <property type="protein sequence ID" value="AAA35892.1"/>
    <property type="molecule type" value="mRNA"/>
</dbReference>
<dbReference type="EMBL" id="Z23063">
    <property type="protein sequence ID" value="CAA80598.1"/>
    <property type="molecule type" value="mRNA"/>
</dbReference>
<dbReference type="EMBL" id="L19686">
    <property type="protein sequence ID" value="AAA21814.1"/>
    <property type="molecule type" value="Genomic_DNA"/>
</dbReference>
<dbReference type="EMBL" id="AF469046">
    <property type="protein sequence ID" value="AAL78635.1"/>
    <property type="molecule type" value="mRNA"/>
</dbReference>
<dbReference type="EMBL" id="EF611126">
    <property type="protein sequence ID" value="ABQ95571.1"/>
    <property type="molecule type" value="mRNA"/>
</dbReference>
<dbReference type="EMBL" id="CR456520">
    <property type="protein sequence ID" value="CAG30406.1"/>
    <property type="molecule type" value="mRNA"/>
</dbReference>
<dbReference type="EMBL" id="AK311929">
    <property type="protein sequence ID" value="BAG34870.1"/>
    <property type="molecule type" value="mRNA"/>
</dbReference>
<dbReference type="EMBL" id="CR407644">
    <property type="protein sequence ID" value="CAG28572.1"/>
    <property type="molecule type" value="mRNA"/>
</dbReference>
<dbReference type="EMBL" id="CR541651">
    <property type="protein sequence ID" value="CAG46452.1"/>
    <property type="molecule type" value="mRNA"/>
</dbReference>
<dbReference type="EMBL" id="BT007148">
    <property type="protein sequence ID" value="AAP35812.1"/>
    <property type="molecule type" value="mRNA"/>
</dbReference>
<dbReference type="EMBL" id="DQ307455">
    <property type="protein sequence ID" value="ABB96245.1"/>
    <property type="molecule type" value="Genomic_DNA"/>
</dbReference>
<dbReference type="EMBL" id="CH471095">
    <property type="protein sequence ID" value="EAW59620.1"/>
    <property type="molecule type" value="Genomic_DNA"/>
</dbReference>
<dbReference type="EMBL" id="BC000447">
    <property type="protein sequence ID" value="AAH00447.1"/>
    <property type="molecule type" value="mRNA"/>
</dbReference>
<dbReference type="EMBL" id="BC007676">
    <property type="protein sequence ID" value="AAH07676.1"/>
    <property type="molecule type" value="mRNA"/>
</dbReference>
<dbReference type="EMBL" id="BC008914">
    <property type="protein sequence ID" value="AAH08914.1"/>
    <property type="molecule type" value="mRNA"/>
</dbReference>
<dbReference type="EMBL" id="BC013976">
    <property type="protein sequence ID" value="AAH13976.1"/>
    <property type="molecule type" value="mRNA"/>
</dbReference>
<dbReference type="EMBL" id="BC022414">
    <property type="protein sequence ID" value="AAH22414.1"/>
    <property type="molecule type" value="mRNA"/>
</dbReference>
<dbReference type="EMBL" id="BC053376">
    <property type="protein sequence ID" value="AAH53376.1"/>
    <property type="molecule type" value="mRNA"/>
</dbReference>
<dbReference type="EMBL" id="M95775">
    <property type="protein sequence ID" value="AAA36179.1"/>
    <property type="molecule type" value="mRNA"/>
</dbReference>
<dbReference type="CCDS" id="CCDS13819.1"/>
<dbReference type="PIR" id="A48793">
    <property type="entry name" value="A48793"/>
</dbReference>
<dbReference type="RefSeq" id="NP_002406.1">
    <property type="nucleotide sequence ID" value="NM_002415.2"/>
</dbReference>
<dbReference type="PDB" id="1CA7">
    <property type="method" value="X-ray"/>
    <property type="resolution" value="2.50 A"/>
    <property type="chains" value="A/B/C=2-115"/>
</dbReference>
<dbReference type="PDB" id="1CGQ">
    <property type="method" value="X-ray"/>
    <property type="resolution" value="2.00 A"/>
    <property type="chains" value="A/B/C=2-115"/>
</dbReference>
<dbReference type="PDB" id="1GCZ">
    <property type="method" value="X-ray"/>
    <property type="resolution" value="1.90 A"/>
    <property type="chains" value="A/B/C=2-115"/>
</dbReference>
<dbReference type="PDB" id="1GD0">
    <property type="method" value="X-ray"/>
    <property type="resolution" value="1.50 A"/>
    <property type="chains" value="A/B/C=2-115"/>
</dbReference>
<dbReference type="PDB" id="1GIF">
    <property type="method" value="X-ray"/>
    <property type="resolution" value="1.90 A"/>
    <property type="chains" value="A/B/C=1-115"/>
</dbReference>
<dbReference type="PDB" id="1LJT">
    <property type="method" value="X-ray"/>
    <property type="resolution" value="2.00 A"/>
    <property type="chains" value="A/B/C=2-115"/>
</dbReference>
<dbReference type="PDB" id="1MIF">
    <property type="method" value="X-ray"/>
    <property type="resolution" value="2.60 A"/>
    <property type="chains" value="A/B/C=1-115"/>
</dbReference>
<dbReference type="PDB" id="1P1G">
    <property type="method" value="X-ray"/>
    <property type="resolution" value="2.50 A"/>
    <property type="chains" value="A/B/C=2-115"/>
</dbReference>
<dbReference type="PDB" id="2OOH">
    <property type="method" value="X-ray"/>
    <property type="resolution" value="1.85 A"/>
    <property type="chains" value="A/B/C=2-115"/>
</dbReference>
<dbReference type="PDB" id="2OOW">
    <property type="method" value="X-ray"/>
    <property type="resolution" value="1.75 A"/>
    <property type="chains" value="A/B/C=2-115"/>
</dbReference>
<dbReference type="PDB" id="2OOZ">
    <property type="method" value="X-ray"/>
    <property type="resolution" value="1.80 A"/>
    <property type="chains" value="A/B/C=2-115"/>
</dbReference>
<dbReference type="PDB" id="3B9S">
    <property type="method" value="X-ray"/>
    <property type="resolution" value="1.80 A"/>
    <property type="chains" value="A/B/C=2-115"/>
</dbReference>
<dbReference type="PDB" id="3CE4">
    <property type="method" value="X-ray"/>
    <property type="resolution" value="1.55 A"/>
    <property type="chains" value="A/B/C=2-115"/>
</dbReference>
<dbReference type="PDB" id="3DJH">
    <property type="method" value="X-ray"/>
    <property type="resolution" value="1.25 A"/>
    <property type="chains" value="A/B/C=2-115"/>
</dbReference>
<dbReference type="PDB" id="3DJI">
    <property type="method" value="X-ray"/>
    <property type="resolution" value="1.95 A"/>
    <property type="chains" value="A/B/C/D/E/F=2-115"/>
</dbReference>
<dbReference type="PDB" id="3HOF">
    <property type="method" value="X-ray"/>
    <property type="resolution" value="1.90 A"/>
    <property type="chains" value="A/B/C=1-115"/>
</dbReference>
<dbReference type="PDB" id="3IJG">
    <property type="method" value="X-ray"/>
    <property type="resolution" value="1.70 A"/>
    <property type="chains" value="A/B/C=2-115"/>
</dbReference>
<dbReference type="PDB" id="3IJJ">
    <property type="method" value="X-ray"/>
    <property type="resolution" value="1.25 A"/>
    <property type="chains" value="A/B/C=2-115"/>
</dbReference>
<dbReference type="PDB" id="3JSF">
    <property type="method" value="X-ray"/>
    <property type="resolution" value="1.93 A"/>
    <property type="chains" value="A/B/C=2-115"/>
</dbReference>
<dbReference type="PDB" id="3JSG">
    <property type="method" value="X-ray"/>
    <property type="resolution" value="1.58 A"/>
    <property type="chains" value="A/B/C=2-115"/>
</dbReference>
<dbReference type="PDB" id="3JTU">
    <property type="method" value="X-ray"/>
    <property type="resolution" value="1.86 A"/>
    <property type="chains" value="A/B/C=2-115"/>
</dbReference>
<dbReference type="PDB" id="3L5P">
    <property type="method" value="X-ray"/>
    <property type="resolution" value="1.80 A"/>
    <property type="chains" value="A/B/C=2-115"/>
</dbReference>
<dbReference type="PDB" id="3L5R">
    <property type="method" value="X-ray"/>
    <property type="resolution" value="1.94 A"/>
    <property type="chains" value="A/B/C=2-115"/>
</dbReference>
<dbReference type="PDB" id="3L5S">
    <property type="method" value="X-ray"/>
    <property type="resolution" value="1.86 A"/>
    <property type="chains" value="A/B/C=2-115"/>
</dbReference>
<dbReference type="PDB" id="3L5T">
    <property type="method" value="X-ray"/>
    <property type="resolution" value="1.86 A"/>
    <property type="chains" value="A/B/C=2-115"/>
</dbReference>
<dbReference type="PDB" id="3L5U">
    <property type="method" value="X-ray"/>
    <property type="resolution" value="1.90 A"/>
    <property type="chains" value="A/B/C=2-115"/>
</dbReference>
<dbReference type="PDB" id="3L5V">
    <property type="method" value="X-ray"/>
    <property type="resolution" value="1.70 A"/>
    <property type="chains" value="A/B/C=2-115"/>
</dbReference>
<dbReference type="PDB" id="3SMB">
    <property type="method" value="X-ray"/>
    <property type="resolution" value="1.60 A"/>
    <property type="chains" value="A/B/C=2-115"/>
</dbReference>
<dbReference type="PDB" id="3SMC">
    <property type="method" value="X-ray"/>
    <property type="resolution" value="1.80 A"/>
    <property type="chains" value="A/B/C=2-115"/>
</dbReference>
<dbReference type="PDB" id="3U18">
    <property type="method" value="X-ray"/>
    <property type="resolution" value="1.90 A"/>
    <property type="chains" value="A/B/C=2-115"/>
</dbReference>
<dbReference type="PDB" id="3WNR">
    <property type="method" value="X-ray"/>
    <property type="resolution" value="2.01 A"/>
    <property type="chains" value="A/B/C=2-115"/>
</dbReference>
<dbReference type="PDB" id="3WNS">
    <property type="method" value="X-ray"/>
    <property type="resolution" value="1.66 A"/>
    <property type="chains" value="A/B/C=2-115"/>
</dbReference>
<dbReference type="PDB" id="3WNT">
    <property type="method" value="X-ray"/>
    <property type="resolution" value="2.07 A"/>
    <property type="chains" value="A/B/C=2-115"/>
</dbReference>
<dbReference type="PDB" id="4ETG">
    <property type="method" value="X-ray"/>
    <property type="resolution" value="1.61 A"/>
    <property type="chains" value="A/B/C=2-115"/>
</dbReference>
<dbReference type="PDB" id="4EUI">
    <property type="method" value="X-ray"/>
    <property type="resolution" value="1.70 A"/>
    <property type="chains" value="A/B/C=2-115"/>
</dbReference>
<dbReference type="PDB" id="4EVG">
    <property type="method" value="X-ray"/>
    <property type="resolution" value="1.70 A"/>
    <property type="chains" value="A/B/C=2-115"/>
</dbReference>
<dbReference type="PDB" id="4F2K">
    <property type="method" value="X-ray"/>
    <property type="resolution" value="1.53 A"/>
    <property type="chains" value="A/B/C=2-115"/>
</dbReference>
<dbReference type="PDB" id="4GRN">
    <property type="method" value="X-ray"/>
    <property type="resolution" value="1.25 A"/>
    <property type="chains" value="A/B/C=2-115"/>
</dbReference>
<dbReference type="PDB" id="4GRO">
    <property type="method" value="X-ray"/>
    <property type="resolution" value="2.00 A"/>
    <property type="chains" value="A/B/C/D/E/F/G/H=2-115"/>
</dbReference>
<dbReference type="PDB" id="4GRP">
    <property type="method" value="X-ray"/>
    <property type="resolution" value="1.27 A"/>
    <property type="chains" value="A/B/C=2-115"/>
</dbReference>
<dbReference type="PDB" id="4GRQ">
    <property type="method" value="X-ray"/>
    <property type="resolution" value="1.65 A"/>
    <property type="chains" value="A/B/C=2-115"/>
</dbReference>
<dbReference type="PDB" id="4GRR">
    <property type="method" value="X-ray"/>
    <property type="resolution" value="1.47 A"/>
    <property type="chains" value="A/B/C=3-115"/>
</dbReference>
<dbReference type="PDB" id="4GRU">
    <property type="method" value="X-ray"/>
    <property type="resolution" value="1.92 A"/>
    <property type="chains" value="A/B/C=2-115"/>
</dbReference>
<dbReference type="PDB" id="4GUM">
    <property type="method" value="X-ray"/>
    <property type="resolution" value="2.33 A"/>
    <property type="chains" value="A/B/C/D/E/F/G/H/I=2-115"/>
</dbReference>
<dbReference type="PDB" id="4K9G">
    <property type="method" value="X-ray"/>
    <property type="resolution" value="1.55 A"/>
    <property type="chains" value="A/B/C=2-115"/>
</dbReference>
<dbReference type="PDB" id="4OSF">
    <property type="method" value="X-ray"/>
    <property type="resolution" value="1.62 A"/>
    <property type="chains" value="A/B/C=2-115"/>
</dbReference>
<dbReference type="PDB" id="4OYQ">
    <property type="method" value="X-ray"/>
    <property type="resolution" value="1.70 A"/>
    <property type="chains" value="A/B/C=2-115"/>
</dbReference>
<dbReference type="PDB" id="4P01">
    <property type="method" value="X-ray"/>
    <property type="resolution" value="2.07 A"/>
    <property type="chains" value="A/B/C=2-115"/>
</dbReference>
<dbReference type="PDB" id="4P0H">
    <property type="method" value="X-ray"/>
    <property type="resolution" value="1.93 A"/>
    <property type="chains" value="A/B/C=2-115"/>
</dbReference>
<dbReference type="PDB" id="4PKK">
    <property type="method" value="X-ray"/>
    <property type="resolution" value="1.78 A"/>
    <property type="chains" value="A/B/C=2-115"/>
</dbReference>
<dbReference type="PDB" id="4PKZ">
    <property type="method" value="X-ray"/>
    <property type="resolution" value="1.90 A"/>
    <property type="chains" value="A/B/C=2-115"/>
</dbReference>
<dbReference type="PDB" id="4PLU">
    <property type="method" value="X-ray"/>
    <property type="resolution" value="1.63 A"/>
    <property type="chains" value="A/B/C=2-115"/>
</dbReference>
<dbReference type="PDB" id="4TRF">
    <property type="method" value="X-ray"/>
    <property type="resolution" value="1.63 A"/>
    <property type="chains" value="A/B/C=2-115"/>
</dbReference>
<dbReference type="PDB" id="4TRU">
    <property type="method" value="X-ray"/>
    <property type="resolution" value="1.81 A"/>
    <property type="chains" value="A/B/C=2-115"/>
</dbReference>
<dbReference type="PDB" id="4WR8">
    <property type="method" value="X-ray"/>
    <property type="resolution" value="2.60 A"/>
    <property type="chains" value="A/B/C/D/E/F/G/H/I/J/K/L/M/N/O/P/Q/R=2-115"/>
</dbReference>
<dbReference type="PDB" id="4WRB">
    <property type="method" value="X-ray"/>
    <property type="resolution" value="1.81 A"/>
    <property type="chains" value="A/B/C=2-115"/>
</dbReference>
<dbReference type="PDB" id="4XX7">
    <property type="method" value="X-ray"/>
    <property type="resolution" value="1.77 A"/>
    <property type="chains" value="A/B/C=2-115"/>
</dbReference>
<dbReference type="PDB" id="4XX8">
    <property type="method" value="X-ray"/>
    <property type="resolution" value="1.77 A"/>
    <property type="chains" value="A/B/C=3-115"/>
</dbReference>
<dbReference type="PDB" id="4Z15">
    <property type="method" value="X-ray"/>
    <property type="resolution" value="1.60 A"/>
    <property type="chains" value="A/B/C=3-115"/>
</dbReference>
<dbReference type="PDB" id="4Z1T">
    <property type="method" value="X-ray"/>
    <property type="resolution" value="1.50 A"/>
    <property type="chains" value="A/B/C=3-115"/>
</dbReference>
<dbReference type="PDB" id="4Z1U">
    <property type="method" value="X-ray"/>
    <property type="resolution" value="2.05 A"/>
    <property type="chains" value="A/B/C/D/E/F=3-115"/>
</dbReference>
<dbReference type="PDB" id="5B4O">
    <property type="method" value="X-ray"/>
    <property type="resolution" value="1.37 A"/>
    <property type="chains" value="A/B/C=2-115"/>
</dbReference>
<dbReference type="PDB" id="5BS9">
    <property type="method" value="X-ray"/>
    <property type="resolution" value="1.98 A"/>
    <property type="chains" value="A/B/C=2-115"/>
</dbReference>
<dbReference type="PDB" id="5BSC">
    <property type="method" value="X-ray"/>
    <property type="resolution" value="1.89 A"/>
    <property type="chains" value="A/B/C=2-115"/>
</dbReference>
<dbReference type="PDB" id="5BSI">
    <property type="method" value="X-ray"/>
    <property type="resolution" value="2.00 A"/>
    <property type="chains" value="A/B/C/D/E/F/G/J=2-115"/>
</dbReference>
<dbReference type="PDB" id="5BSJ">
    <property type="method" value="X-ray"/>
    <property type="resolution" value="2.00 A"/>
    <property type="chains" value="A/B/C=2-115"/>
</dbReference>
<dbReference type="PDB" id="5EIZ">
    <property type="method" value="X-ray"/>
    <property type="resolution" value="1.96 A"/>
    <property type="chains" value="A/B/C=2-115"/>
</dbReference>
<dbReference type="PDB" id="5HVS">
    <property type="method" value="X-ray"/>
    <property type="resolution" value="1.75 A"/>
    <property type="chains" value="A/B/C=2-115"/>
</dbReference>
<dbReference type="PDB" id="5HVT">
    <property type="method" value="X-ray"/>
    <property type="resolution" value="1.75 A"/>
    <property type="chains" value="A/B/C=2-115"/>
</dbReference>
<dbReference type="PDB" id="5HVV">
    <property type="method" value="X-ray"/>
    <property type="resolution" value="1.90 A"/>
    <property type="chains" value="A/B/C=3-115"/>
</dbReference>
<dbReference type="PDB" id="5J7P">
    <property type="method" value="X-ray"/>
    <property type="resolution" value="1.85 A"/>
    <property type="chains" value="A/B/C=2-115"/>
</dbReference>
<dbReference type="PDB" id="5J7Q">
    <property type="method" value="X-ray"/>
    <property type="resolution" value="2.05 A"/>
    <property type="chains" value="A/B/C=2-115"/>
</dbReference>
<dbReference type="PDB" id="5UMJ">
    <property type="method" value="X-ray"/>
    <property type="resolution" value="1.61 A"/>
    <property type="chains" value="A/B/C=2-115"/>
</dbReference>
<dbReference type="PDB" id="5UMK">
    <property type="method" value="X-ray"/>
    <property type="resolution" value="1.73 A"/>
    <property type="chains" value="A/B/C=2-115"/>
</dbReference>
<dbReference type="PDB" id="5UZY">
    <property type="method" value="X-ray"/>
    <property type="resolution" value="1.71 A"/>
    <property type="chains" value="A/B/C=2-115"/>
</dbReference>
<dbReference type="PDB" id="5V70">
    <property type="method" value="X-ray"/>
    <property type="resolution" value="1.94 A"/>
    <property type="chains" value="A/B/C=2-115"/>
</dbReference>
<dbReference type="PDB" id="5V73">
    <property type="method" value="X-ray"/>
    <property type="resolution" value="1.68 A"/>
    <property type="chains" value="A/B/C=2-115"/>
</dbReference>
<dbReference type="PDB" id="5XEJ">
    <property type="method" value="X-ray"/>
    <property type="resolution" value="2.50 A"/>
    <property type="chains" value="A/B/C=2-115"/>
</dbReference>
<dbReference type="PDB" id="6B1C">
    <property type="method" value="X-ray"/>
    <property type="resolution" value="2.16 A"/>
    <property type="chains" value="A/B/C=2-115"/>
</dbReference>
<dbReference type="PDB" id="6B1K">
    <property type="method" value="X-ray"/>
    <property type="resolution" value="1.17 A"/>
    <property type="chains" value="A/B/C=2-115"/>
</dbReference>
<dbReference type="PDB" id="6B2C">
    <property type="method" value="X-ray"/>
    <property type="resolution" value="2.00 A"/>
    <property type="chains" value="A/B/C=2-115"/>
</dbReference>
<dbReference type="PDB" id="6BG6">
    <property type="method" value="X-ray"/>
    <property type="resolution" value="1.52 A"/>
    <property type="chains" value="A/B/C=2-115"/>
</dbReference>
<dbReference type="PDB" id="6BG7">
    <property type="method" value="X-ray"/>
    <property type="resolution" value="2.54 A"/>
    <property type="chains" value="A/B/C=2-115"/>
</dbReference>
<dbReference type="PDB" id="6CB5">
    <property type="method" value="X-ray"/>
    <property type="resolution" value="1.78 A"/>
    <property type="chains" value="A/B/C=2-115"/>
</dbReference>
<dbReference type="PDB" id="6CBF">
    <property type="method" value="X-ray"/>
    <property type="resolution" value="2.30 A"/>
    <property type="chains" value="A/B/C=2-115"/>
</dbReference>
<dbReference type="PDB" id="6CBG">
    <property type="method" value="X-ray"/>
    <property type="resolution" value="2.00 A"/>
    <property type="chains" value="A/B/C=2-115"/>
</dbReference>
<dbReference type="PDB" id="6CBH">
    <property type="method" value="X-ray"/>
    <property type="resolution" value="2.00 A"/>
    <property type="chains" value="A/B/C=2-115"/>
</dbReference>
<dbReference type="PDB" id="6FVE">
    <property type="method" value="X-ray"/>
    <property type="resolution" value="1.41 A"/>
    <property type="chains" value="A/B/C=2-115"/>
</dbReference>
<dbReference type="PDB" id="6FVH">
    <property type="method" value="X-ray"/>
    <property type="resolution" value="1.40 A"/>
    <property type="chains" value="A/B/C=2-115"/>
</dbReference>
<dbReference type="PDB" id="6OY8">
    <property type="method" value="X-ray"/>
    <property type="resolution" value="1.53 A"/>
    <property type="chains" value="A/B/C=2-115"/>
</dbReference>
<dbReference type="PDB" id="6OYB">
    <property type="method" value="X-ray"/>
    <property type="resolution" value="1.53 A"/>
    <property type="chains" value="A/B/C=2-115"/>
</dbReference>
<dbReference type="PDB" id="6OYE">
    <property type="method" value="X-ray"/>
    <property type="resolution" value="1.53 A"/>
    <property type="chains" value="A/B/C=2-115"/>
</dbReference>
<dbReference type="PDB" id="6OYG">
    <property type="method" value="X-ray"/>
    <property type="resolution" value="1.55 A"/>
    <property type="chains" value="A/B/C=2-115"/>
</dbReference>
<dbReference type="PDB" id="6PEG">
    <property type="method" value="X-ray"/>
    <property type="resolution" value="2.00 A"/>
    <property type="chains" value="D/E/F=2-115"/>
</dbReference>
<dbReference type="PDB" id="7E45">
    <property type="method" value="X-ray"/>
    <property type="resolution" value="1.43 A"/>
    <property type="chains" value="A/B/C=2-115"/>
</dbReference>
<dbReference type="PDB" id="7E47">
    <property type="method" value="X-ray"/>
    <property type="resolution" value="1.38 A"/>
    <property type="chains" value="A/B/C=2-115"/>
</dbReference>
<dbReference type="PDB" id="7E49">
    <property type="method" value="X-ray"/>
    <property type="resolution" value="1.57 A"/>
    <property type="chains" value="A/B/C=2-115"/>
</dbReference>
<dbReference type="PDB" id="7E4A">
    <property type="method" value="X-ray"/>
    <property type="resolution" value="1.48 A"/>
    <property type="chains" value="A/B/C=2-115"/>
</dbReference>
<dbReference type="PDB" id="7E4B">
    <property type="method" value="X-ray"/>
    <property type="resolution" value="1.77 A"/>
    <property type="chains" value="A/B/C=2-115"/>
</dbReference>
<dbReference type="PDB" id="7E4C">
    <property type="method" value="X-ray"/>
    <property type="resolution" value="1.64 A"/>
    <property type="chains" value="A/B/C=2-115"/>
</dbReference>
<dbReference type="PDB" id="7KQX">
    <property type="method" value="X-ray"/>
    <property type="resolution" value="1.60 A"/>
    <property type="chains" value="A/B/C=2-115"/>
</dbReference>
<dbReference type="PDB" id="7XTX">
    <property type="method" value="X-ray"/>
    <property type="resolution" value="1.28 A"/>
    <property type="chains" value="A/B/C=2-115"/>
</dbReference>
<dbReference type="PDB" id="7XVX">
    <property type="method" value="Other"/>
    <property type="resolution" value="1.60 A"/>
    <property type="chains" value="A/B/C=2-115"/>
</dbReference>
<dbReference type="PDB" id="8CA0">
    <property type="method" value="NMR"/>
    <property type="chains" value="A/B/C=2-115"/>
</dbReference>
<dbReference type="PDB" id="8IMR">
    <property type="method" value="X-ray"/>
    <property type="resolution" value="1.30 A"/>
    <property type="chains" value="A/B/C=2-115"/>
</dbReference>
<dbReference type="PDB" id="8SON">
    <property type="method" value="X-ray"/>
    <property type="resolution" value="1.63 A"/>
    <property type="chains" value="A/B/C=2-115"/>
</dbReference>
<dbReference type="PDB" id="8SPN">
    <property type="method" value="X-ray"/>
    <property type="resolution" value="1.73 A"/>
    <property type="chains" value="A/B/C=2-115"/>
</dbReference>
<dbReference type="PDB" id="8TT9">
    <property type="method" value="X-ray"/>
    <property type="resolution" value="1.68 A"/>
    <property type="chains" value="A/B/C=2-115"/>
</dbReference>
<dbReference type="PDB" id="9BNQ">
    <property type="method" value="X-ray"/>
    <property type="resolution" value="1.09 A"/>
    <property type="chains" value="A/B/C=2-115"/>
</dbReference>
<dbReference type="PDB" id="9BNR">
    <property type="method" value="X-ray"/>
    <property type="resolution" value="1.53 A"/>
    <property type="chains" value="A/B/C=2-115"/>
</dbReference>
<dbReference type="PDBsum" id="1CA7"/>
<dbReference type="PDBsum" id="1CGQ"/>
<dbReference type="PDBsum" id="1GCZ"/>
<dbReference type="PDBsum" id="1GD0"/>
<dbReference type="PDBsum" id="1GIF"/>
<dbReference type="PDBsum" id="1LJT"/>
<dbReference type="PDBsum" id="1MIF"/>
<dbReference type="PDBsum" id="1P1G"/>
<dbReference type="PDBsum" id="2OOH"/>
<dbReference type="PDBsum" id="2OOW"/>
<dbReference type="PDBsum" id="2OOZ"/>
<dbReference type="PDBsum" id="3B9S"/>
<dbReference type="PDBsum" id="3CE4"/>
<dbReference type="PDBsum" id="3DJH"/>
<dbReference type="PDBsum" id="3DJI"/>
<dbReference type="PDBsum" id="3HOF"/>
<dbReference type="PDBsum" id="3IJG"/>
<dbReference type="PDBsum" id="3IJJ"/>
<dbReference type="PDBsum" id="3JSF"/>
<dbReference type="PDBsum" id="3JSG"/>
<dbReference type="PDBsum" id="3JTU"/>
<dbReference type="PDBsum" id="3L5P"/>
<dbReference type="PDBsum" id="3L5R"/>
<dbReference type="PDBsum" id="3L5S"/>
<dbReference type="PDBsum" id="3L5T"/>
<dbReference type="PDBsum" id="3L5U"/>
<dbReference type="PDBsum" id="3L5V"/>
<dbReference type="PDBsum" id="3SMB"/>
<dbReference type="PDBsum" id="3SMC"/>
<dbReference type="PDBsum" id="3U18"/>
<dbReference type="PDBsum" id="3WNR"/>
<dbReference type="PDBsum" id="3WNS"/>
<dbReference type="PDBsum" id="3WNT"/>
<dbReference type="PDBsum" id="4ETG"/>
<dbReference type="PDBsum" id="4EUI"/>
<dbReference type="PDBsum" id="4EVG"/>
<dbReference type="PDBsum" id="4F2K"/>
<dbReference type="PDBsum" id="4GRN"/>
<dbReference type="PDBsum" id="4GRO"/>
<dbReference type="PDBsum" id="4GRP"/>
<dbReference type="PDBsum" id="4GRQ"/>
<dbReference type="PDBsum" id="4GRR"/>
<dbReference type="PDBsum" id="4GRU"/>
<dbReference type="PDBsum" id="4GUM"/>
<dbReference type="PDBsum" id="4K9G"/>
<dbReference type="PDBsum" id="4OSF"/>
<dbReference type="PDBsum" id="4OYQ"/>
<dbReference type="PDBsum" id="4P01"/>
<dbReference type="PDBsum" id="4P0H"/>
<dbReference type="PDBsum" id="4PKK"/>
<dbReference type="PDBsum" id="4PKZ"/>
<dbReference type="PDBsum" id="4PLU"/>
<dbReference type="PDBsum" id="4TRF"/>
<dbReference type="PDBsum" id="4TRU"/>
<dbReference type="PDBsum" id="4WR8"/>
<dbReference type="PDBsum" id="4WRB"/>
<dbReference type="PDBsum" id="4XX7"/>
<dbReference type="PDBsum" id="4XX8"/>
<dbReference type="PDBsum" id="4Z15"/>
<dbReference type="PDBsum" id="4Z1T"/>
<dbReference type="PDBsum" id="4Z1U"/>
<dbReference type="PDBsum" id="5B4O"/>
<dbReference type="PDBsum" id="5BS9"/>
<dbReference type="PDBsum" id="5BSC"/>
<dbReference type="PDBsum" id="5BSI"/>
<dbReference type="PDBsum" id="5BSJ"/>
<dbReference type="PDBsum" id="5EIZ"/>
<dbReference type="PDBsum" id="5HVS"/>
<dbReference type="PDBsum" id="5HVT"/>
<dbReference type="PDBsum" id="5HVV"/>
<dbReference type="PDBsum" id="5J7P"/>
<dbReference type="PDBsum" id="5J7Q"/>
<dbReference type="PDBsum" id="5UMJ"/>
<dbReference type="PDBsum" id="5UMK"/>
<dbReference type="PDBsum" id="5UZY"/>
<dbReference type="PDBsum" id="5V70"/>
<dbReference type="PDBsum" id="5V73"/>
<dbReference type="PDBsum" id="5XEJ"/>
<dbReference type="PDBsum" id="6B1C"/>
<dbReference type="PDBsum" id="6B1K"/>
<dbReference type="PDBsum" id="6B2C"/>
<dbReference type="PDBsum" id="6BG6"/>
<dbReference type="PDBsum" id="6BG7"/>
<dbReference type="PDBsum" id="6CB5"/>
<dbReference type="PDBsum" id="6CBF"/>
<dbReference type="PDBsum" id="6CBG"/>
<dbReference type="PDBsum" id="6CBH"/>
<dbReference type="PDBsum" id="6FVE"/>
<dbReference type="PDBsum" id="6FVH"/>
<dbReference type="PDBsum" id="6OY8"/>
<dbReference type="PDBsum" id="6OYB"/>
<dbReference type="PDBsum" id="6OYE"/>
<dbReference type="PDBsum" id="6OYG"/>
<dbReference type="PDBsum" id="6PEG"/>
<dbReference type="PDBsum" id="7E45"/>
<dbReference type="PDBsum" id="7E47"/>
<dbReference type="PDBsum" id="7E49"/>
<dbReference type="PDBsum" id="7E4A"/>
<dbReference type="PDBsum" id="7E4B"/>
<dbReference type="PDBsum" id="7E4C"/>
<dbReference type="PDBsum" id="7KQX"/>
<dbReference type="PDBsum" id="7XTX"/>
<dbReference type="PDBsum" id="7XVX"/>
<dbReference type="PDBsum" id="8CA0"/>
<dbReference type="PDBsum" id="8IMR"/>
<dbReference type="PDBsum" id="8SON"/>
<dbReference type="PDBsum" id="8SPN"/>
<dbReference type="PDBsum" id="8TT9"/>
<dbReference type="PDBsum" id="9BNQ"/>
<dbReference type="PDBsum" id="9BNR"/>
<dbReference type="SASBDB" id="P14174"/>
<dbReference type="SMR" id="P14174"/>
<dbReference type="BioGRID" id="110428">
    <property type="interactions" value="281"/>
</dbReference>
<dbReference type="CORUM" id="P14174"/>
<dbReference type="DIP" id="DIP-31137N"/>
<dbReference type="FunCoup" id="P14174">
    <property type="interactions" value="454"/>
</dbReference>
<dbReference type="IntAct" id="P14174">
    <property type="interactions" value="139"/>
</dbReference>
<dbReference type="MINT" id="P14174"/>
<dbReference type="STRING" id="9606.ENSP00000215754"/>
<dbReference type="BindingDB" id="P14174"/>
<dbReference type="ChEMBL" id="CHEMBL2085"/>
<dbReference type="DrugBank" id="DB01880">
    <property type="generic name" value="3,4-Dihydroxycinnamic Acid"/>
</dbReference>
<dbReference type="DrugBank" id="DB07888">
    <property type="generic name" value="3-(4-HYDROXYPHENYL)-4,5-DIHYDRO-5-ISOXAZOLE-ACETIC ACID METHYL ESTER"/>
</dbReference>
<dbReference type="DrugBank" id="DB08334">
    <property type="generic name" value="3-FLUORO-4-HYDROXYBENZALDEHYDE O-(CYCLOHEXYLCARBONYL)OXIME"/>
</dbReference>
<dbReference type="DrugBank" id="DB08335">
    <property type="generic name" value="4-HYDROXYBENZALDEHYDE O-(3,3-DIMETHYLBUTANOYL)OXIME"/>
</dbReference>
<dbReference type="DrugBank" id="DB08333">
    <property type="generic name" value="4-HYDROXYBENZALDEHYDE O-(CYCLOHEXYLCARBONYL)OXIME"/>
</dbReference>
<dbReference type="DrugBank" id="DB07718">
    <property type="generic name" value="4-Hydroxyphenylpyruvic acid"/>
</dbReference>
<dbReference type="DrugBank" id="DB08765">
    <property type="generic name" value="6-HYDROXY-1,3-BENZOTHIAZOLE-2-SULFONAMIDE"/>
</dbReference>
<dbReference type="DrugBank" id="DB02728">
    <property type="generic name" value="7-Hydroxy-2-Oxo-Chromene-3-Carboxylic Acid Ethyl Ester"/>
</dbReference>
<dbReference type="DrugCentral" id="P14174"/>
<dbReference type="GlyCosmos" id="P14174">
    <property type="glycosylation" value="2 sites, 1 glycan"/>
</dbReference>
<dbReference type="GlyGen" id="P14174">
    <property type="glycosylation" value="6 sites, 1 N-linked glycan (1 site), 1 O-linked glycan (2 sites)"/>
</dbReference>
<dbReference type="iPTMnet" id="P14174"/>
<dbReference type="MetOSite" id="P14174"/>
<dbReference type="PhosphoSitePlus" id="P14174"/>
<dbReference type="SwissPalm" id="P14174"/>
<dbReference type="BioMuta" id="MIF"/>
<dbReference type="DMDM" id="1170955"/>
<dbReference type="jPOST" id="P14174"/>
<dbReference type="MassIVE" id="P14174"/>
<dbReference type="PaxDb" id="9606-ENSP00000215754"/>
<dbReference type="PeptideAtlas" id="P14174"/>
<dbReference type="ProteomicsDB" id="53030"/>
<dbReference type="Pumba" id="P14174"/>
<dbReference type="TopDownProteomics" id="P14174"/>
<dbReference type="ABCD" id="P14174">
    <property type="antibodies" value="12 sequenced antibodies"/>
</dbReference>
<dbReference type="Antibodypedia" id="34865">
    <property type="antibodies" value="894 antibodies from 43 providers"/>
</dbReference>
<dbReference type="DNASU" id="4282"/>
<dbReference type="Ensembl" id="ENST00000215754.8">
    <property type="protein sequence ID" value="ENSP00000215754.7"/>
    <property type="gene ID" value="ENSG00000240972.2"/>
</dbReference>
<dbReference type="Ensembl" id="ENST00000613839.2">
    <property type="protein sequence ID" value="ENSP00000482779.1"/>
    <property type="gene ID" value="ENSG00000276701.2"/>
</dbReference>
<dbReference type="GeneID" id="4282"/>
<dbReference type="KEGG" id="hsa:4282"/>
<dbReference type="MANE-Select" id="ENST00000215754.8">
    <property type="protein sequence ID" value="ENSP00000215754.7"/>
    <property type="RefSeq nucleotide sequence ID" value="NM_002415.2"/>
    <property type="RefSeq protein sequence ID" value="NP_002406.1"/>
</dbReference>
<dbReference type="UCSC" id="uc002zyr.2">
    <property type="organism name" value="human"/>
</dbReference>
<dbReference type="AGR" id="HGNC:7097"/>
<dbReference type="CTD" id="4282"/>
<dbReference type="DisGeNET" id="4282"/>
<dbReference type="GeneCards" id="MIF"/>
<dbReference type="HGNC" id="HGNC:7097">
    <property type="gene designation" value="MIF"/>
</dbReference>
<dbReference type="HPA" id="ENSG00000240972">
    <property type="expression patterns" value="Low tissue specificity"/>
</dbReference>
<dbReference type="MalaCards" id="MIF"/>
<dbReference type="MIM" id="153620">
    <property type="type" value="gene"/>
</dbReference>
<dbReference type="MIM" id="604302">
    <property type="type" value="phenotype"/>
</dbReference>
<dbReference type="neXtProt" id="NX_P14174"/>
<dbReference type="OpenTargets" id="ENSG00000240972"/>
<dbReference type="Orphanet" id="586">
    <property type="disease" value="Cystic fibrosis"/>
</dbReference>
<dbReference type="Orphanet" id="85414">
    <property type="disease" value="Systemic-onset juvenile idiopathic arthritis"/>
</dbReference>
<dbReference type="PharmGKB" id="PA30819"/>
<dbReference type="VEuPathDB" id="HostDB:ENSG00000240972"/>
<dbReference type="eggNOG" id="KOG1759">
    <property type="taxonomic scope" value="Eukaryota"/>
</dbReference>
<dbReference type="GeneTree" id="ENSGT00940000155608"/>
<dbReference type="HOGENOM" id="CLU_129906_1_1_1"/>
<dbReference type="InParanoid" id="P14174"/>
<dbReference type="OMA" id="YINFFDM"/>
<dbReference type="OrthoDB" id="255819at2759"/>
<dbReference type="PAN-GO" id="P14174">
    <property type="GO annotations" value="3 GO annotations based on evolutionary models"/>
</dbReference>
<dbReference type="PhylomeDB" id="P14174"/>
<dbReference type="TreeFam" id="TF313853"/>
<dbReference type="BRENDA" id="5.3.2.1">
    <property type="organism ID" value="2681"/>
</dbReference>
<dbReference type="BRENDA" id="5.3.3.12">
    <property type="organism ID" value="2681"/>
</dbReference>
<dbReference type="PathwayCommons" id="P14174"/>
<dbReference type="Reactome" id="R-HSA-202733">
    <property type="pathway name" value="Cell surface interactions at the vascular wall"/>
</dbReference>
<dbReference type="Reactome" id="R-HSA-6798695">
    <property type="pathway name" value="Neutrophil degranulation"/>
</dbReference>
<dbReference type="Reactome" id="R-HSA-8950505">
    <property type="pathway name" value="Gene and protein expression by JAK-STAT signaling after Interleukin-12 stimulation"/>
</dbReference>
<dbReference type="SignaLink" id="P14174"/>
<dbReference type="SIGNOR" id="P14174"/>
<dbReference type="BioGRID-ORCS" id="4282">
    <property type="hits" value="9 hits in 1152 CRISPR screens"/>
</dbReference>
<dbReference type="ChiTaRS" id="MIF">
    <property type="organism name" value="human"/>
</dbReference>
<dbReference type="EvolutionaryTrace" id="P14174"/>
<dbReference type="GeneWiki" id="Macrophage_migration_inhibitory_factor"/>
<dbReference type="GenomeRNAi" id="4282"/>
<dbReference type="Pharos" id="P14174">
    <property type="development level" value="Tchem"/>
</dbReference>
<dbReference type="PRO" id="PR:P14174"/>
<dbReference type="Proteomes" id="UP000005640">
    <property type="component" value="Chromosome 22"/>
</dbReference>
<dbReference type="RNAct" id="P14174">
    <property type="molecule type" value="protein"/>
</dbReference>
<dbReference type="Bgee" id="ENSG00000240972">
    <property type="expression patterns" value="Expressed in adenohypophysis and 97 other cell types or tissues"/>
</dbReference>
<dbReference type="ExpressionAtlas" id="P14174">
    <property type="expression patterns" value="baseline and differential"/>
</dbReference>
<dbReference type="GO" id="GO:0009986">
    <property type="term" value="C:cell surface"/>
    <property type="evidence" value="ECO:0000314"/>
    <property type="project" value="BHF-UCL"/>
</dbReference>
<dbReference type="GO" id="GO:0005737">
    <property type="term" value="C:cytoplasm"/>
    <property type="evidence" value="ECO:0000314"/>
    <property type="project" value="ARUK-UCL"/>
</dbReference>
<dbReference type="GO" id="GO:0005829">
    <property type="term" value="C:cytosol"/>
    <property type="evidence" value="ECO:0000314"/>
    <property type="project" value="HPA"/>
</dbReference>
<dbReference type="GO" id="GO:0070062">
    <property type="term" value="C:extracellular exosome"/>
    <property type="evidence" value="ECO:0007005"/>
    <property type="project" value="UniProtKB"/>
</dbReference>
<dbReference type="GO" id="GO:0005576">
    <property type="term" value="C:extracellular region"/>
    <property type="evidence" value="ECO:0000314"/>
    <property type="project" value="UniProtKB"/>
</dbReference>
<dbReference type="GO" id="GO:0005615">
    <property type="term" value="C:extracellular space"/>
    <property type="evidence" value="ECO:0000314"/>
    <property type="project" value="BHF-UCL"/>
</dbReference>
<dbReference type="GO" id="GO:1904813">
    <property type="term" value="C:ficolin-1-rich granule lumen"/>
    <property type="evidence" value="ECO:0000304"/>
    <property type="project" value="Reactome"/>
</dbReference>
<dbReference type="GO" id="GO:0005654">
    <property type="term" value="C:nucleoplasm"/>
    <property type="evidence" value="ECO:0000314"/>
    <property type="project" value="HPA"/>
</dbReference>
<dbReference type="GO" id="GO:0005886">
    <property type="term" value="C:plasma membrane"/>
    <property type="evidence" value="ECO:0000314"/>
    <property type="project" value="ARUK-UCL"/>
</dbReference>
<dbReference type="GO" id="GO:0034774">
    <property type="term" value="C:secretory granule lumen"/>
    <property type="evidence" value="ECO:0000304"/>
    <property type="project" value="Reactome"/>
</dbReference>
<dbReference type="GO" id="GO:0031982">
    <property type="term" value="C:vesicle"/>
    <property type="evidence" value="ECO:0007005"/>
    <property type="project" value="UniProtKB"/>
</dbReference>
<dbReference type="GO" id="GO:0042056">
    <property type="term" value="F:chemoattractant activity"/>
    <property type="evidence" value="ECO:0000314"/>
    <property type="project" value="BHF-UCL"/>
</dbReference>
<dbReference type="GO" id="GO:0005125">
    <property type="term" value="F:cytokine activity"/>
    <property type="evidence" value="ECO:0000314"/>
    <property type="project" value="UniProtKB"/>
</dbReference>
<dbReference type="GO" id="GO:0005126">
    <property type="term" value="F:cytokine receptor binding"/>
    <property type="evidence" value="ECO:0000314"/>
    <property type="project" value="BHF-UCL"/>
</dbReference>
<dbReference type="GO" id="GO:0004167">
    <property type="term" value="F:dopachrome isomerase activity"/>
    <property type="evidence" value="ECO:0000314"/>
    <property type="project" value="UniProtKB"/>
</dbReference>
<dbReference type="GO" id="GO:0042802">
    <property type="term" value="F:identical protein binding"/>
    <property type="evidence" value="ECO:0000353"/>
    <property type="project" value="IntAct"/>
</dbReference>
<dbReference type="GO" id="GO:0050178">
    <property type="term" value="F:phenylpyruvate tautomerase activity"/>
    <property type="evidence" value="ECO:0000314"/>
    <property type="project" value="MGI"/>
</dbReference>
<dbReference type="GO" id="GO:0002020">
    <property type="term" value="F:protease binding"/>
    <property type="evidence" value="ECO:0007669"/>
    <property type="project" value="Ensembl"/>
</dbReference>
<dbReference type="GO" id="GO:0019752">
    <property type="term" value="P:carboxylic acid metabolic process"/>
    <property type="evidence" value="ECO:0000314"/>
    <property type="project" value="BHF-UCL"/>
</dbReference>
<dbReference type="GO" id="GO:0007166">
    <property type="term" value="P:cell surface receptor signaling pathway"/>
    <property type="evidence" value="ECO:0000314"/>
    <property type="project" value="UniProtKB"/>
</dbReference>
<dbReference type="GO" id="GO:0090398">
    <property type="term" value="P:cellular senescence"/>
    <property type="evidence" value="ECO:0007669"/>
    <property type="project" value="Ensembl"/>
</dbReference>
<dbReference type="GO" id="GO:0030330">
    <property type="term" value="P:DNA damage response, signal transduction by p53 class mediator"/>
    <property type="evidence" value="ECO:0007669"/>
    <property type="project" value="Ensembl"/>
</dbReference>
<dbReference type="GO" id="GO:0006954">
    <property type="term" value="P:inflammatory response"/>
    <property type="evidence" value="ECO:0007669"/>
    <property type="project" value="UniProtKB-KW"/>
</dbReference>
<dbReference type="GO" id="GO:0045087">
    <property type="term" value="P:innate immune response"/>
    <property type="evidence" value="ECO:0007669"/>
    <property type="project" value="UniProtKB-KW"/>
</dbReference>
<dbReference type="GO" id="GO:0043066">
    <property type="term" value="P:negative regulation of apoptotic process"/>
    <property type="evidence" value="ECO:0000314"/>
    <property type="project" value="UniProtKB"/>
</dbReference>
<dbReference type="GO" id="GO:0030336">
    <property type="term" value="P:negative regulation of cell migration"/>
    <property type="evidence" value="ECO:0000315"/>
    <property type="project" value="ARUK-UCL"/>
</dbReference>
<dbReference type="GO" id="GO:2000773">
    <property type="term" value="P:negative regulation of cellular senescence"/>
    <property type="evidence" value="ECO:0000314"/>
    <property type="project" value="BHF-UCL"/>
</dbReference>
<dbReference type="GO" id="GO:0043518">
    <property type="term" value="P:negative regulation of DNA damage response, signal transduction by p53 class mediator"/>
    <property type="evidence" value="ECO:0000314"/>
    <property type="project" value="BHF-UCL"/>
</dbReference>
<dbReference type="GO" id="GO:0010629">
    <property type="term" value="P:negative regulation of gene expression"/>
    <property type="evidence" value="ECO:0000314"/>
    <property type="project" value="BHF-UCL"/>
</dbReference>
<dbReference type="GO" id="GO:1902166">
    <property type="term" value="P:negative regulation of intrinsic apoptotic signaling pathway in response to DNA damage by p53 class mediator"/>
    <property type="evidence" value="ECO:0000314"/>
    <property type="project" value="BHF-UCL"/>
</dbReference>
<dbReference type="GO" id="GO:0010760">
    <property type="term" value="P:negative regulation of macrophage chemotaxis"/>
    <property type="evidence" value="ECO:0000314"/>
    <property type="project" value="BHF-UCL"/>
</dbReference>
<dbReference type="GO" id="GO:0002906">
    <property type="term" value="P:negative regulation of mature B cell apoptotic process"/>
    <property type="evidence" value="ECO:0007669"/>
    <property type="project" value="Ensembl"/>
</dbReference>
<dbReference type="GO" id="GO:0033033">
    <property type="term" value="P:negative regulation of myeloid cell apoptotic process"/>
    <property type="evidence" value="ECO:0007669"/>
    <property type="project" value="Ensembl"/>
</dbReference>
<dbReference type="GO" id="GO:0051248">
    <property type="term" value="P:negative regulation of protein metabolic process"/>
    <property type="evidence" value="ECO:0007669"/>
    <property type="project" value="Ensembl"/>
</dbReference>
<dbReference type="GO" id="GO:0090238">
    <property type="term" value="P:positive regulation of arachidonate secretion"/>
    <property type="evidence" value="ECO:0007669"/>
    <property type="project" value="Ensembl"/>
</dbReference>
<dbReference type="GO" id="GO:0030890">
    <property type="term" value="P:positive regulation of B cell proliferation"/>
    <property type="evidence" value="ECO:0000314"/>
    <property type="project" value="BHF-UCL"/>
</dbReference>
<dbReference type="GO" id="GO:0141163">
    <property type="term" value="P:positive regulation of cAMP/PKA signal transduction"/>
    <property type="evidence" value="ECO:0000314"/>
    <property type="project" value="BHF-UCL"/>
</dbReference>
<dbReference type="GO" id="GO:0008284">
    <property type="term" value="P:positive regulation of cell population proliferation"/>
    <property type="evidence" value="ECO:0000314"/>
    <property type="project" value="BHF-UCL"/>
</dbReference>
<dbReference type="GO" id="GO:2000343">
    <property type="term" value="P:positive regulation of chemokine (C-X-C motif) ligand 2 production"/>
    <property type="evidence" value="ECO:0007669"/>
    <property type="project" value="Ensembl"/>
</dbReference>
<dbReference type="GO" id="GO:0001819">
    <property type="term" value="P:positive regulation of cytokine production"/>
    <property type="evidence" value="ECO:0000314"/>
    <property type="project" value="BHF-UCL"/>
</dbReference>
<dbReference type="GO" id="GO:0070374">
    <property type="term" value="P:positive regulation of ERK1 and ERK2 cascade"/>
    <property type="evidence" value="ECO:0000314"/>
    <property type="project" value="BHF-UCL"/>
</dbReference>
<dbReference type="GO" id="GO:0048146">
    <property type="term" value="P:positive regulation of fibroblast proliferation"/>
    <property type="evidence" value="ECO:0000314"/>
    <property type="project" value="BHF-UCL"/>
</dbReference>
<dbReference type="GO" id="GO:0031666">
    <property type="term" value="P:positive regulation of lipopolysaccharide-mediated signaling pathway"/>
    <property type="evidence" value="ECO:0007669"/>
    <property type="project" value="Ensembl"/>
</dbReference>
<dbReference type="GO" id="GO:0061081">
    <property type="term" value="P:positive regulation of myeloid leukocyte cytokine production involved in immune response"/>
    <property type="evidence" value="ECO:0007669"/>
    <property type="project" value="Ensembl"/>
</dbReference>
<dbReference type="GO" id="GO:0042327">
    <property type="term" value="P:positive regulation of phosphorylation"/>
    <property type="evidence" value="ECO:0000314"/>
    <property type="project" value="BHF-UCL"/>
</dbReference>
<dbReference type="GO" id="GO:0061078">
    <property type="term" value="P:positive regulation of prostaglandin secretion involved in immune response"/>
    <property type="evidence" value="ECO:0007669"/>
    <property type="project" value="Ensembl"/>
</dbReference>
<dbReference type="GO" id="GO:0032760">
    <property type="term" value="P:positive regulation of tumor necrosis factor production"/>
    <property type="evidence" value="ECO:0000314"/>
    <property type="project" value="BHF-UCL"/>
</dbReference>
<dbReference type="GO" id="GO:0001516">
    <property type="term" value="P:prostaglandin biosynthetic process"/>
    <property type="evidence" value="ECO:0000314"/>
    <property type="project" value="UniProtKB"/>
</dbReference>
<dbReference type="GO" id="GO:0070207">
    <property type="term" value="P:protein homotrimerization"/>
    <property type="evidence" value="ECO:0000353"/>
    <property type="project" value="UniProtKB"/>
</dbReference>
<dbReference type="GO" id="GO:0043030">
    <property type="term" value="P:regulation of macrophage activation"/>
    <property type="evidence" value="ECO:0000303"/>
    <property type="project" value="UniProtKB"/>
</dbReference>
<dbReference type="FunFam" id="3.30.429.10:FF:000001">
    <property type="entry name" value="Macrophage migration inhibitory factor"/>
    <property type="match status" value="1"/>
</dbReference>
<dbReference type="Gene3D" id="3.30.429.10">
    <property type="entry name" value="Macrophage Migration Inhibitory Factor"/>
    <property type="match status" value="1"/>
</dbReference>
<dbReference type="InterPro" id="IPR001398">
    <property type="entry name" value="Macrophage_inhib_fac"/>
</dbReference>
<dbReference type="InterPro" id="IPR019829">
    <property type="entry name" value="Macrophage_inhib_fac_CS"/>
</dbReference>
<dbReference type="InterPro" id="IPR014347">
    <property type="entry name" value="Tautomerase/MIF_sf"/>
</dbReference>
<dbReference type="PANTHER" id="PTHR11954">
    <property type="entry name" value="D-DOPACHROME DECARBOXYLASE"/>
    <property type="match status" value="1"/>
</dbReference>
<dbReference type="PANTHER" id="PTHR11954:SF6">
    <property type="entry name" value="MACROPHAGE MIGRATION INHIBITORY FACTOR"/>
    <property type="match status" value="1"/>
</dbReference>
<dbReference type="Pfam" id="PF01187">
    <property type="entry name" value="MIF"/>
    <property type="match status" value="1"/>
</dbReference>
<dbReference type="SUPFAM" id="SSF55331">
    <property type="entry name" value="Tautomerase/MIF"/>
    <property type="match status" value="1"/>
</dbReference>
<dbReference type="PROSITE" id="PS01158">
    <property type="entry name" value="MIF"/>
    <property type="match status" value="1"/>
</dbReference>
<keyword id="KW-0002">3D-structure</keyword>
<keyword id="KW-0007">Acetylation</keyword>
<keyword id="KW-0202">Cytokine</keyword>
<keyword id="KW-0963">Cytoplasm</keyword>
<keyword id="KW-0903">Direct protein sequencing</keyword>
<keyword id="KW-0391">Immunity</keyword>
<keyword id="KW-0395">Inflammatory response</keyword>
<keyword id="KW-0399">Innate immunity</keyword>
<keyword id="KW-0413">Isomerase</keyword>
<keyword id="KW-1267">Proteomics identification</keyword>
<keyword id="KW-1185">Reference proteome</keyword>
<keyword id="KW-0964">Secreted</keyword>
<protein>
    <recommendedName>
        <fullName evidence="19">Macrophage migration inhibitory factor</fullName>
        <shortName evidence="19">MIF</shortName>
        <ecNumber evidence="4">5.3.2.1</ecNumber>
    </recommendedName>
    <alternativeName>
        <fullName evidence="1">Glycosylation-inhibiting factor</fullName>
        <shortName evidence="1">GIF</shortName>
    </alternativeName>
    <alternativeName>
        <fullName>L-dopachrome isomerase</fullName>
    </alternativeName>
    <alternativeName>
        <fullName>L-dopachrome tautomerase</fullName>
        <ecNumber evidence="12">5.3.3.12</ecNumber>
    </alternativeName>
    <alternativeName>
        <fullName>Phenylpyruvate tautomerase</fullName>
    </alternativeName>
</protein>
<evidence type="ECO:0000250" key="1">
    <source>
        <dbReference type="UniProtKB" id="P34884"/>
    </source>
</evidence>
<evidence type="ECO:0000269" key="2">
    <source>
    </source>
</evidence>
<evidence type="ECO:0000269" key="3">
    <source>
    </source>
</evidence>
<evidence type="ECO:0000269" key="4">
    <source>
    </source>
</evidence>
<evidence type="ECO:0000269" key="5">
    <source>
    </source>
</evidence>
<evidence type="ECO:0000269" key="6">
    <source>
    </source>
</evidence>
<evidence type="ECO:0000269" key="7">
    <source>
    </source>
</evidence>
<evidence type="ECO:0000269" key="8">
    <source>
    </source>
</evidence>
<evidence type="ECO:0000269" key="9">
    <source>
    </source>
</evidence>
<evidence type="ECO:0000269" key="10">
    <source>
    </source>
</evidence>
<evidence type="ECO:0000269" key="11">
    <source>
    </source>
</evidence>
<evidence type="ECO:0000269" key="12">
    <source>
    </source>
</evidence>
<evidence type="ECO:0000269" key="13">
    <source>
    </source>
</evidence>
<evidence type="ECO:0000269" key="14">
    <source>
    </source>
</evidence>
<evidence type="ECO:0000269" key="15">
    <source>
    </source>
</evidence>
<evidence type="ECO:0000269" key="16">
    <source>
    </source>
</evidence>
<evidence type="ECO:0000269" key="17">
    <source>
    </source>
</evidence>
<evidence type="ECO:0000269" key="18">
    <source>
    </source>
</evidence>
<evidence type="ECO:0000303" key="19">
    <source>
    </source>
</evidence>
<evidence type="ECO:0000305" key="20"/>
<evidence type="ECO:0000312" key="21">
    <source>
        <dbReference type="HGNC" id="HGNC:7097"/>
    </source>
</evidence>
<evidence type="ECO:0007744" key="22">
    <source>
    </source>
</evidence>
<evidence type="ECO:0007744" key="23">
    <source>
    </source>
</evidence>
<evidence type="ECO:0007829" key="24">
    <source>
        <dbReference type="PDB" id="1GD0"/>
    </source>
</evidence>
<evidence type="ECO:0007829" key="25">
    <source>
        <dbReference type="PDB" id="6B1K"/>
    </source>
</evidence>
<comment type="function">
    <text evidence="4 10 11 12 15">Pro-inflammatory cytokine involved in the innate immune response to bacterial pathogens (PubMed:15908412, PubMed:17443469, PubMed:23776208). The expression of MIF at sites of inflammation suggests a role as mediator in regulating the function of macrophages in host defense (PubMed:15908412, PubMed:17443469, PubMed:23776208). Counteracts the anti-inflammatory activity of glucocorticoids (PubMed:15908412, PubMed:17443469, PubMed:23776208). Has phenylpyruvate tautomerase and dopachrome tautomerase activity (in vitro), but the physiological substrate is not known (PubMed:11439086, PubMed:17526494). It is not clear whether the tautomerase activity has any physiological relevance, and whether it is important for cytokine activity (PubMed:11439086, PubMed:17526494).</text>
</comment>
<comment type="catalytic activity">
    <reaction evidence="4">
        <text>3-phenylpyruvate = enol-phenylpyruvate</text>
        <dbReference type="Rhea" id="RHEA:17097"/>
        <dbReference type="ChEBI" id="CHEBI:16815"/>
        <dbReference type="ChEBI" id="CHEBI:18005"/>
        <dbReference type="EC" id="5.3.2.1"/>
    </reaction>
</comment>
<comment type="catalytic activity">
    <reaction evidence="12">
        <text>L-dopachrome = 5,6-dihydroxyindole-2-carboxylate</text>
        <dbReference type="Rhea" id="RHEA:13041"/>
        <dbReference type="ChEBI" id="CHEBI:16875"/>
        <dbReference type="ChEBI" id="CHEBI:57509"/>
        <dbReference type="EC" id="5.3.3.12"/>
    </reaction>
</comment>
<comment type="biophysicochemical properties">
    <kinetics>
        <KM evidence="4">249 uM for phenylpyruvate</KM>
        <KM evidence="4">168 uM for p-hydroxyphenylpyruvate</KM>
        <Vmax evidence="4">2113.0 umol/min/mg enzyme toward phenylpyruvate</Vmax>
        <Vmax evidence="4">524.0 umol/min/mg enzyme toward p-hydroxyphenylpyruvate</Vmax>
    </kinetics>
</comment>
<comment type="subunit">
    <text evidence="1 2 7 8 14 15 18">Homotrimer (PubMed:23776208, PubMed:8610159). Interacts with CXCR2 extracellular domain (By similarity). Interacts with the CD74 extracellular domain, USO1, COPS5 and BNIPL (PubMed:11089976, PubMed:12681488, PubMed:12782713, PubMed:19454686, PubMed:23776208).</text>
</comment>
<comment type="interaction">
    <interactant intactId="EBI-372712">
        <id>P14174</id>
    </interactant>
    <interactant intactId="EBI-526420">
        <id>O43521-2</id>
        <label>BCL2L11</label>
    </interactant>
    <organismsDiffer>false</organismsDiffer>
    <experiments>5</experiments>
</comment>
<comment type="interaction">
    <interactant intactId="EBI-372712">
        <id>P14174</id>
    </interactant>
    <interactant intactId="EBI-297353">
        <id>P00533</id>
        <label>EGFR</label>
    </interactant>
    <organismsDiffer>false</organismsDiffer>
    <experiments>3</experiments>
</comment>
<comment type="interaction">
    <interactant intactId="EBI-372712">
        <id>P14174</id>
    </interactant>
    <interactant intactId="EBI-352256">
        <id>Q92743</id>
        <label>HTRA1</label>
    </interactant>
    <organismsDiffer>false</organismsDiffer>
    <experiments>3</experiments>
</comment>
<comment type="interaction">
    <interactant intactId="EBI-372712">
        <id>P14174</id>
    </interactant>
    <interactant intactId="EBI-372712">
        <id>P14174</id>
        <label>MIF</label>
    </interactant>
    <organismsDiffer>false</organismsDiffer>
    <experiments>7</experiments>
</comment>
<comment type="interaction">
    <interactant intactId="EBI-372712">
        <id>P14174</id>
    </interactant>
    <interactant intactId="EBI-741158">
        <id>Q96HA8</id>
        <label>NTAQ1</label>
    </interactant>
    <organismsDiffer>false</organismsDiffer>
    <experiments>4</experiments>
</comment>
<comment type="subcellular location">
    <subcellularLocation>
        <location evidence="10 14 16 17">Secreted</location>
    </subcellularLocation>
    <subcellularLocation>
        <location evidence="2 14">Cytoplasm</location>
    </subcellularLocation>
    <text evidence="10">Does not have a cleavable signal sequence and is secreted via a specialized, non-classical pathway. Secreted by macrophages upon stimulation by bacterial lipopolysaccharide (LPS), or by M.tuberculosis antigens.</text>
</comment>
<comment type="induction">
    <text evidence="10 16">Up-regulated in concanavalin-A-treated lymphocytes. Up-regulated in macrophages upon exposure to M.tuberculosis antigens.</text>
</comment>
<comment type="disease" evidence="5">
    <disease id="DI-02819">
        <name>Rheumatoid arthritis systemic juvenile</name>
        <acronym>RASJ</acronym>
        <description>An inflammatory articular disorder with systemic onset beginning before the age of 16. It represents a subgroup of juvenile arthritis associated with severe extraarticular features and occasionally fatal complications. During active phases of the disorder, patients display a typical daily spiking fever, an evanescent macular rash, lymphadenopathy, hepatosplenomegaly, serositis, myalgia and arthritis.</description>
        <dbReference type="MIM" id="604302"/>
    </disease>
    <text>Disease susceptibility is associated with variants affecting the gene represented in this entry.</text>
</comment>
<comment type="miscellaneous">
    <text evidence="11">Serum levels of MIF are elevated in patients with severe sepsis or septic shock. High levels of MIF are correlated with low survival. Drugs that inhibit tautomerase activity protect against death due to sepsis.</text>
</comment>
<comment type="similarity">
    <text evidence="20">Belongs to the MIF family.</text>
</comment>
<comment type="online information" name="Atlas of Genetics and Cytogenetics in Oncology and Haematology">
    <link uri="https://atlasgeneticsoncology.org/gene/41365/MIF"/>
</comment>
<proteinExistence type="evidence at protein level"/>